<gene>
    <name evidence="35" type="primary">CYB5R3</name>
    <name type="synonym">DIA1</name>
</gene>
<proteinExistence type="evidence at protein level"/>
<sequence>MGAQLSTLGHMVLFPVWFLYSLLMKLFQRSTPAITLESPDIKYPLRLIDREIISHDTRRFRFALPSPQHILGLPVGQHIYLSARIDGNLVVRPYTPISSDDDKGFVDLVIKVYFKDTHPKFPAGGKMSQYLESMQIGDTIEFRGPSGLLVYQGKGKFAIRPDKKSNPIIRTVKSVGMIAGGTGITPMLQVIRAIMKDPDDHTVCHLLFANQTEKDILLRPELEELRNKHSARFKLWYTLDRAPEAWDYGQGFVNEEMIRDHLPPPEEEPLVLMCGPPPMIQYACLPNLDHVGHPTERCFVF</sequence>
<name>NB5R3_HUMAN</name>
<protein>
    <recommendedName>
        <fullName evidence="28">NADH-cytochrome b5 reductase 3</fullName>
        <shortName>B5R</shortName>
        <shortName>Cytochrome b5 reductase</shortName>
        <ecNumber evidence="5 7 10 12 13 19 21">1.6.2.2</ecNumber>
    </recommendedName>
    <alternativeName>
        <fullName evidence="27">Diaphorase-1</fullName>
    </alternativeName>
</protein>
<organism>
    <name type="scientific">Homo sapiens</name>
    <name type="common">Human</name>
    <dbReference type="NCBI Taxonomy" id="9606"/>
    <lineage>
        <taxon>Eukaryota</taxon>
        <taxon>Metazoa</taxon>
        <taxon>Chordata</taxon>
        <taxon>Craniata</taxon>
        <taxon>Vertebrata</taxon>
        <taxon>Euteleostomi</taxon>
        <taxon>Mammalia</taxon>
        <taxon>Eutheria</taxon>
        <taxon>Euarchontoglires</taxon>
        <taxon>Primates</taxon>
        <taxon>Haplorrhini</taxon>
        <taxon>Catarrhini</taxon>
        <taxon>Hominidae</taxon>
        <taxon>Homo</taxon>
    </lineage>
</organism>
<keyword id="KW-0002">3D-structure</keyword>
<keyword id="KW-0007">Acetylation</keyword>
<keyword id="KW-0877">Alternative promoter usage</keyword>
<keyword id="KW-0025">Alternative splicing</keyword>
<keyword id="KW-0152">Cholesterol biosynthesis</keyword>
<keyword id="KW-0153">Cholesterol metabolism</keyword>
<keyword id="KW-0963">Cytoplasm</keyword>
<keyword id="KW-0903">Direct protein sequencing</keyword>
<keyword id="KW-0225">Disease variant</keyword>
<keyword id="KW-0256">Endoplasmic reticulum</keyword>
<keyword id="KW-0274">FAD</keyword>
<keyword id="KW-0285">Flavoprotein</keyword>
<keyword id="KW-0444">Lipid biosynthesis</keyword>
<keyword id="KW-0443">Lipid metabolism</keyword>
<keyword id="KW-0449">Lipoprotein</keyword>
<keyword id="KW-0472">Membrane</keyword>
<keyword id="KW-0496">Mitochondrion</keyword>
<keyword id="KW-1000">Mitochondrion outer membrane</keyword>
<keyword id="KW-0519">Myristate</keyword>
<keyword id="KW-0520">NAD</keyword>
<keyword id="KW-0560">Oxidoreductase</keyword>
<keyword id="KW-0597">Phosphoprotein</keyword>
<keyword id="KW-1267">Proteomics identification</keyword>
<keyword id="KW-1185">Reference proteome</keyword>
<keyword id="KW-0752">Steroid biosynthesis</keyword>
<keyword id="KW-0753">Steroid metabolism</keyword>
<keyword id="KW-0756">Sterol biosynthesis</keyword>
<keyword id="KW-1207">Sterol metabolism</keyword>
<evidence type="ECO:0000250" key="1">
    <source>
        <dbReference type="UniProtKB" id="P20070"/>
    </source>
</evidence>
<evidence type="ECO:0000250" key="2">
    <source>
        <dbReference type="UniProtKB" id="P83686"/>
    </source>
</evidence>
<evidence type="ECO:0000250" key="3">
    <source>
        <dbReference type="UniProtKB" id="Q9DCN2"/>
    </source>
</evidence>
<evidence type="ECO:0000255" key="4">
    <source>
        <dbReference type="PROSITE-ProRule" id="PRU00716"/>
    </source>
</evidence>
<evidence type="ECO:0000269" key="5">
    <source>
    </source>
</evidence>
<evidence type="ECO:0000269" key="6">
    <source>
    </source>
</evidence>
<evidence type="ECO:0000269" key="7">
    <source>
    </source>
</evidence>
<evidence type="ECO:0000269" key="8">
    <source>
    </source>
</evidence>
<evidence type="ECO:0000269" key="9">
    <source>
    </source>
</evidence>
<evidence type="ECO:0000269" key="10">
    <source>
    </source>
</evidence>
<evidence type="ECO:0000269" key="11">
    <source>
    </source>
</evidence>
<evidence type="ECO:0000269" key="12">
    <source>
    </source>
</evidence>
<evidence type="ECO:0000269" key="13">
    <source>
    </source>
</evidence>
<evidence type="ECO:0000269" key="14">
    <source>
    </source>
</evidence>
<evidence type="ECO:0000269" key="15">
    <source>
    </source>
</evidence>
<evidence type="ECO:0000269" key="16">
    <source>
    </source>
</evidence>
<evidence type="ECO:0000269" key="17">
    <source>
    </source>
</evidence>
<evidence type="ECO:0000269" key="18">
    <source>
    </source>
</evidence>
<evidence type="ECO:0000269" key="19">
    <source>
    </source>
</evidence>
<evidence type="ECO:0000269" key="20">
    <source>
    </source>
</evidence>
<evidence type="ECO:0000269" key="21">
    <source>
    </source>
</evidence>
<evidence type="ECO:0000269" key="22">
    <source>
    </source>
</evidence>
<evidence type="ECO:0000269" key="23">
    <source>
    </source>
</evidence>
<evidence type="ECO:0000269" key="24">
    <source ref="4"/>
</evidence>
<evidence type="ECO:0000269" key="25">
    <source ref="5"/>
</evidence>
<evidence type="ECO:0000303" key="26">
    <source>
    </source>
</evidence>
<evidence type="ECO:0000303" key="27">
    <source>
    </source>
</evidence>
<evidence type="ECO:0000305" key="28"/>
<evidence type="ECO:0000305" key="29">
    <source>
    </source>
</evidence>
<evidence type="ECO:0000305" key="30">
    <source>
    </source>
</evidence>
<evidence type="ECO:0000305" key="31">
    <source>
    </source>
</evidence>
<evidence type="ECO:0000305" key="32">
    <source>
    </source>
</evidence>
<evidence type="ECO:0000305" key="33">
    <source>
    </source>
</evidence>
<evidence type="ECO:0000305" key="34">
    <source>
    </source>
</evidence>
<evidence type="ECO:0000312" key="35">
    <source>
        <dbReference type="HGNC" id="HGNC:2873"/>
    </source>
</evidence>
<evidence type="ECO:0007744" key="36">
    <source>
        <dbReference type="PDB" id="1UMK"/>
    </source>
</evidence>
<evidence type="ECO:0007744" key="37">
    <source>
    </source>
</evidence>
<evidence type="ECO:0007744" key="38">
    <source>
    </source>
</evidence>
<evidence type="ECO:0007829" key="39">
    <source>
        <dbReference type="PDB" id="1UMK"/>
    </source>
</evidence>
<evidence type="ECO:0007829" key="40">
    <source>
        <dbReference type="PDB" id="7THG"/>
    </source>
</evidence>
<evidence type="ECO:0007829" key="41">
    <source>
        <dbReference type="PDB" id="7TSW"/>
    </source>
</evidence>
<feature type="initiator methionine" description="Removed" evidence="16">
    <location>
        <position position="1"/>
    </location>
</feature>
<feature type="chain" id="PRO_0000019392" description="NADH-cytochrome b5 reductase 3">
    <location>
        <begin position="2"/>
        <end position="301"/>
    </location>
</feature>
<feature type="domain" description="FAD-binding FR-type" evidence="4">
    <location>
        <begin position="40"/>
        <end position="152"/>
    </location>
</feature>
<feature type="binding site" evidence="8 36">
    <location>
        <position position="92"/>
    </location>
    <ligand>
        <name>FAD</name>
        <dbReference type="ChEBI" id="CHEBI:57692"/>
    </ligand>
</feature>
<feature type="binding site" evidence="8 36">
    <location>
        <position position="93"/>
    </location>
    <ligand>
        <name>FAD</name>
        <dbReference type="ChEBI" id="CHEBI:57692"/>
    </ligand>
</feature>
<feature type="binding site" evidence="8 36">
    <location>
        <position position="94"/>
    </location>
    <ligand>
        <name>FAD</name>
        <dbReference type="ChEBI" id="CHEBI:57692"/>
    </ligand>
</feature>
<feature type="binding site" evidence="8 36">
    <location>
        <position position="109"/>
    </location>
    <ligand>
        <name>FAD</name>
        <dbReference type="ChEBI" id="CHEBI:57692"/>
    </ligand>
</feature>
<feature type="binding site" evidence="8 36">
    <location>
        <position position="111"/>
    </location>
    <ligand>
        <name>FAD</name>
        <dbReference type="ChEBI" id="CHEBI:57692"/>
    </ligand>
</feature>
<feature type="binding site" evidence="8 36">
    <location>
        <position position="114"/>
    </location>
    <ligand>
        <name>FAD</name>
        <dbReference type="ChEBI" id="CHEBI:57692"/>
    </ligand>
</feature>
<feature type="binding site" evidence="8 36">
    <location>
        <position position="126"/>
    </location>
    <ligand>
        <name>FAD</name>
        <dbReference type="ChEBI" id="CHEBI:57692"/>
    </ligand>
</feature>
<feature type="binding site" evidence="8 36">
    <location>
        <position position="127"/>
    </location>
    <ligand>
        <name>FAD</name>
        <dbReference type="ChEBI" id="CHEBI:57692"/>
    </ligand>
</feature>
<feature type="binding site" evidence="8 36">
    <location>
        <position position="128"/>
    </location>
    <ligand>
        <name>FAD</name>
        <dbReference type="ChEBI" id="CHEBI:57692"/>
    </ligand>
</feature>
<feature type="binding site" evidence="8 36">
    <location>
        <position position="185"/>
    </location>
    <ligand>
        <name>FAD</name>
        <dbReference type="ChEBI" id="CHEBI:57692"/>
    </ligand>
</feature>
<feature type="modified residue" description="N6-acetyllysine" evidence="38">
    <location>
        <position position="42"/>
    </location>
</feature>
<feature type="modified residue" description="Phosphotyrosine" evidence="37">
    <location>
        <position position="43"/>
    </location>
</feature>
<feature type="modified residue" description="N6-acetyllysine" evidence="3">
    <location>
        <position position="120"/>
    </location>
</feature>
<feature type="lipid moiety-binding region" description="N-myristoyl glycine" evidence="15 16">
    <location>
        <position position="2"/>
    </location>
</feature>
<feature type="splice variant" id="VSP_010200" description="In isoform 2." evidence="28">
    <location>
        <begin position="1"/>
        <end position="23"/>
    </location>
</feature>
<feature type="splice variant" id="VSP_042827" description="In isoform 3." evidence="26">
    <original>MGAQLST</original>
    <variation>MNRSLLVGCMQSKDIWGREESICERLKQDGLDVERAESWE</variation>
    <location>
        <begin position="1"/>
        <end position="7"/>
    </location>
</feature>
<feature type="sequence variant" id="VAR_004619" description="In METHB-CYB5R3; type 1; 62% of activity; dbSNP:rs121965007." evidence="7 9 11 24">
    <original>R</original>
    <variation>Q</variation>
    <location>
        <position position="58"/>
    </location>
</feature>
<feature type="sequence variant" id="VAR_018419" description="In dbSNP:rs1130706." evidence="14 17 24">
    <original>S</original>
    <variation>P</variation>
    <location>
        <position position="66"/>
    </location>
</feature>
<feature type="sequence variant" id="VAR_010750" description="In METHB-CYB5R3; type 1; dbSNP:rs121965013." evidence="22 24">
    <original>L</original>
    <variation>P</variation>
    <location>
        <position position="73"/>
    </location>
</feature>
<feature type="sequence variant" id="VAR_004620" description="In METHB-CYB5R3; type 1; 77% of activity; dbSNP:rs121965009." evidence="7">
    <original>V</original>
    <variation>M</variation>
    <location>
        <position position="106"/>
    </location>
</feature>
<feature type="sequence variant" id="VAR_010751" description="In dbSNP:rs1800457." evidence="20 25">
    <original>T</original>
    <variation>S</variation>
    <location>
        <position position="117"/>
    </location>
</feature>
<feature type="sequence variant" id="VAR_004621" description="In METHB-CYB5R3; type 2; Hiroshima; decreased NADH-cytochrome b5 reductase activity; highly increased Km for NADH and decreased Kcat; dbSNP:rs121965006." evidence="12">
    <original>S</original>
    <variation>P</variation>
    <location>
        <position position="128"/>
    </location>
</feature>
<feature type="sequence variant" id="VAR_004622" description="In METHB-CYB5R3; dbSNP:rs121965008." evidence="11">
    <original>L</original>
    <variation>P</variation>
    <location>
        <position position="149"/>
    </location>
</feature>
<feature type="sequence variant" id="VAR_010752" description="In METHB-CYB5R3; type 1; dbSNP:rs201232518." evidence="23">
    <original>A</original>
    <variation>V</variation>
    <location>
        <position position="179"/>
    </location>
</feature>
<feature type="sequence variant" id="VAR_010753" description="In METHB-CYB5R3; type 2; dbSNP:rs121965011." evidence="18">
    <original>C</original>
    <variation>R</variation>
    <location>
        <position position="204"/>
    </location>
</feature>
<feature type="sequence variant" id="VAR_010754" description="In METHB-CYB5R3; type 1; reduced protein stability; no effect on NADH-cytochrome b5 reductase activity; dbSNP:rs121965015." evidence="5 24">
    <original>C</original>
    <variation>Y</variation>
    <location>
        <position position="204"/>
    </location>
</feature>
<feature type="sequence variant" id="VAR_037315" description="In METHB-CYB5R3; type 1; retains approximately 38% of residual NADH-cytochrome b5 reductase activity; dbSNP:rs121965017." evidence="6 10">
    <location>
        <position position="256"/>
    </location>
</feature>
<feature type="sequence variant" id="VAR_010755" description="In METHB-CYB5R3; type 2; dbSNP:rs794728012." evidence="18">
    <location>
        <position position="273"/>
    </location>
</feature>
<feature type="sequence variant" id="VAR_037316" description="In METHB-CYB5R3; type 1; retains approximately 58% of residual NADH-cytochrome b5 reductase activity; dbSNP:rs121965016." evidence="6 10">
    <original>G</original>
    <variation>D</variation>
    <location>
        <position position="292"/>
    </location>
</feature>
<feature type="sequence variant" id="VAR_004623" description="In METHB-CYB5R3; type2; almost complete loss of activity; dbSNP:rs121965012." evidence="19">
    <location>
        <position position="299"/>
    </location>
</feature>
<feature type="mutagenesis site" description="Decreased NADH-cytochrome b5 reductase activity, highly increases Km for NADH and decreases Kcat." evidence="12">
    <original>S</original>
    <variation>A</variation>
    <location>
        <position position="128"/>
    </location>
</feature>
<feature type="mutagenesis site" description="No effect on NADH-cytochrome b5 reductase activity." evidence="13">
    <original>C</original>
    <variation>S</variation>
    <location>
        <position position="204"/>
    </location>
</feature>
<feature type="mutagenesis site" description="Loss of 30% of NADH-cytochrome b5 reductase activity." evidence="13">
    <original>C</original>
    <variation>A</variation>
    <location>
        <position position="274"/>
    </location>
</feature>
<feature type="mutagenesis site" description="Loss of 80% of NADH-cytochrome b5 reductase activity." evidence="13">
    <original>C</original>
    <variation>A</variation>
    <location>
        <position position="274"/>
    </location>
</feature>
<feature type="mutagenesis site" description="No effect on NADH-cytochrome b5 reductase activity." evidence="13">
    <original>C</original>
    <variation>S</variation>
    <location>
        <position position="274"/>
    </location>
</feature>
<feature type="mutagenesis site" description="No effect on NADH-cytochrome b5 reductase activity." evidence="13">
    <original>C</original>
    <variation>S</variation>
    <location>
        <position position="284"/>
    </location>
</feature>
<feature type="mutagenesis site" description="No effect on NADH-cytochrome b5 reductase activity." evidence="13">
    <original>C</original>
    <variation>S</variation>
    <location>
        <position position="298"/>
    </location>
</feature>
<feature type="mutagenesis site" description="No effect on protein stability and NADH-cytochrome b5 reductase activity." evidence="19">
    <original>FVF</original>
    <variation>LVL</variation>
    <location>
        <begin position="299"/>
        <end position="301"/>
    </location>
</feature>
<feature type="mutagenesis site" description="Decreases protein stability and slightly decreases NADH-cytochrome b5 reductase activity." evidence="19">
    <original>F</original>
    <variation>A</variation>
    <location>
        <position position="299"/>
    </location>
</feature>
<feature type="mutagenesis site" description="No effect on protein stability and NADH-cytochrome b5 reductase activity." evidence="19">
    <original>F</original>
    <variation>L</variation>
    <location>
        <position position="299"/>
    </location>
</feature>
<feature type="mutagenesis site" description="Decreases protein stability and slightly decreases NADH-cytochrome b5 reductase activity." evidence="19">
    <original>F</original>
    <variation>A</variation>
    <location>
        <position position="301"/>
    </location>
</feature>
<feature type="mutagenesis site" description="No effect on protein stability and NADH-cytochrome b5 reductase activity." evidence="19">
    <original>F</original>
    <variation>L</variation>
    <location>
        <position position="301"/>
    </location>
</feature>
<feature type="sequence conflict" description="In Ref. 11; AAA52307." evidence="28" ref="11">
    <original>QRSTP</original>
    <variation>RWPRA</variation>
    <location>
        <begin position="28"/>
        <end position="32"/>
    </location>
</feature>
<feature type="sequence conflict" description="In Ref. 1; AAA59900." evidence="28" ref="1">
    <original>R</original>
    <variation>G</variation>
    <location>
        <position position="29"/>
    </location>
</feature>
<feature type="sequence conflict" description="In Ref. 4; CAA09006/CAA09007/CAA09008." evidence="28" ref="4">
    <original>T</original>
    <variation>K</variation>
    <location>
        <position position="31"/>
    </location>
</feature>
<feature type="sequence conflict" description="In Ref. 11; AAA52307." evidence="28" ref="11">
    <original>IT</original>
    <variation>LA</variation>
    <location>
        <begin position="34"/>
        <end position="35"/>
    </location>
</feature>
<feature type="sequence conflict" description="In Ref. 4; CAA09006/CAA09007." evidence="28" ref="4">
    <original>ML</original>
    <variation>IV</variation>
    <location>
        <begin position="187"/>
        <end position="188"/>
    </location>
</feature>
<feature type="sequence conflict" description="In Ref. 4; CAA09006/CAA09007." evidence="28" ref="4">
    <original>IR</original>
    <variation>MS</variation>
    <location>
        <begin position="191"/>
        <end position="192"/>
    </location>
</feature>
<feature type="sequence conflict" description="In Ref. 11; AAA52306." evidence="28" ref="11">
    <original>R</original>
    <variation>G</variation>
    <location>
        <position position="192"/>
    </location>
</feature>
<feature type="sequence conflict" description="In Ref. 4; CAA09006/CAA09007." evidence="28" ref="4">
    <original>FK</original>
    <variation>CN</variation>
    <location>
        <begin position="233"/>
        <end position="234"/>
    </location>
</feature>
<feature type="sequence conflict" description="In Ref. 3; AAL87744." evidence="28" ref="3">
    <original>I</original>
    <variation>N</variation>
    <location>
        <position position="280"/>
    </location>
</feature>
<feature type="strand" evidence="41">
    <location>
        <begin position="33"/>
        <end position="35"/>
    </location>
</feature>
<feature type="strand" evidence="39">
    <location>
        <begin position="43"/>
        <end position="52"/>
    </location>
</feature>
<feature type="strand" evidence="39">
    <location>
        <begin position="54"/>
        <end position="63"/>
    </location>
</feature>
<feature type="strand" evidence="39">
    <location>
        <begin position="78"/>
        <end position="85"/>
    </location>
</feature>
<feature type="strand" evidence="39">
    <location>
        <begin position="88"/>
        <end position="94"/>
    </location>
</feature>
<feature type="strand" evidence="39">
    <location>
        <begin position="104"/>
        <end position="111"/>
    </location>
</feature>
<feature type="strand" evidence="39">
    <location>
        <begin position="115"/>
        <end position="118"/>
    </location>
</feature>
<feature type="helix" evidence="39">
    <location>
        <begin position="126"/>
        <end position="133"/>
    </location>
</feature>
<feature type="strand" evidence="39">
    <location>
        <begin position="139"/>
        <end position="146"/>
    </location>
</feature>
<feature type="strand" evidence="39">
    <location>
        <begin position="148"/>
        <end position="153"/>
    </location>
</feature>
<feature type="strand" evidence="39">
    <location>
        <begin position="156"/>
        <end position="159"/>
    </location>
</feature>
<feature type="strand" evidence="40">
    <location>
        <begin position="161"/>
        <end position="165"/>
    </location>
</feature>
<feature type="strand" evidence="39">
    <location>
        <begin position="168"/>
        <end position="171"/>
    </location>
</feature>
<feature type="strand" evidence="39">
    <location>
        <begin position="173"/>
        <end position="180"/>
    </location>
</feature>
<feature type="helix" evidence="39">
    <location>
        <begin position="181"/>
        <end position="183"/>
    </location>
</feature>
<feature type="helix" evidence="39">
    <location>
        <begin position="184"/>
        <end position="195"/>
    </location>
</feature>
<feature type="strand" evidence="39">
    <location>
        <begin position="203"/>
        <end position="212"/>
    </location>
</feature>
<feature type="helix" evidence="39">
    <location>
        <begin position="213"/>
        <end position="215"/>
    </location>
</feature>
<feature type="helix" evidence="39">
    <location>
        <begin position="219"/>
        <end position="228"/>
    </location>
</feature>
<feature type="turn" evidence="39">
    <location>
        <begin position="230"/>
        <end position="232"/>
    </location>
</feature>
<feature type="strand" evidence="39">
    <location>
        <begin position="233"/>
        <end position="241"/>
    </location>
</feature>
<feature type="strand" evidence="39">
    <location>
        <begin position="247"/>
        <end position="252"/>
    </location>
</feature>
<feature type="helix" evidence="39">
    <location>
        <begin position="255"/>
        <end position="261"/>
    </location>
</feature>
<feature type="helix" evidence="39">
    <location>
        <begin position="265"/>
        <end position="267"/>
    </location>
</feature>
<feature type="strand" evidence="39">
    <location>
        <begin position="270"/>
        <end position="275"/>
    </location>
</feature>
<feature type="helix" evidence="39">
    <location>
        <begin position="277"/>
        <end position="282"/>
    </location>
</feature>
<feature type="helix" evidence="39">
    <location>
        <begin position="285"/>
        <end position="291"/>
    </location>
</feature>
<feature type="helix" evidence="39">
    <location>
        <begin position="295"/>
        <end position="297"/>
    </location>
</feature>
<feature type="strand" evidence="39">
    <location>
        <begin position="298"/>
        <end position="300"/>
    </location>
</feature>
<reference key="1">
    <citation type="journal article" date="1989" name="Gene">
        <title>The organization and the complete nucleotide sequence of the human NADH-cytochrome b5 reductase gene.</title>
        <authorList>
            <person name="Tomatsu S."/>
            <person name="Kobayashi Y."/>
            <person name="Fukumaki Y."/>
            <person name="Yubisui T."/>
            <person name="Orii T."/>
            <person name="Sakaki Y."/>
        </authorList>
    </citation>
    <scope>NUCLEOTIDE SEQUENCE [GENOMIC DNA]</scope>
    <scope>VARIANT PRO-66</scope>
    <source>
        <tissue>Placenta</tissue>
    </source>
</reference>
<reference key="2">
    <citation type="submission" date="1996-11" db="EMBL/GenBank/DDBJ databases">
        <authorList>
            <person name="Voice M.W."/>
        </authorList>
    </citation>
    <scope>NUCLEOTIDE SEQUENCE [MRNA] (ISOFORM 1)</scope>
    <source>
        <tissue>Liver</tissue>
    </source>
</reference>
<reference key="3">
    <citation type="submission" date="2001-03" db="EMBL/GenBank/DDBJ databases">
        <authorList>
            <person name="Yoon B."/>
            <person name="Chung H."/>
            <person name="Ko E."/>
            <person name="Lee D."/>
        </authorList>
    </citation>
    <scope>NUCLEOTIDE SEQUENCE [MRNA] (ISOFORM 1)</scope>
</reference>
<reference key="4">
    <citation type="submission" date="1998-08" db="EMBL/GenBank/DDBJ databases">
        <authorList>
            <person name="Lan F."/>
        </authorList>
    </citation>
    <scope>NUCLEOTIDE SEQUENCE [MRNA] (ISOFORM 1)</scope>
    <scope>VARIANT PRO-66</scope>
    <scope>VARIANTS HM GLN-58; PRO-73 AND TYR-204</scope>
    <source>
        <tissue>Leukocyte</tissue>
    </source>
</reference>
<reference key="5">
    <citation type="submission" date="2003-07" db="EMBL/GenBank/DDBJ databases">
        <authorList>
            <consortium name="NIEHS SNPs program"/>
        </authorList>
    </citation>
    <scope>NUCLEOTIDE SEQUENCE [GENOMIC DNA]</scope>
    <scope>VARIANT SER-117</scope>
</reference>
<reference key="6">
    <citation type="submission" date="2003-08" db="EMBL/GenBank/DDBJ databases">
        <title>Cloning of human full-length CDSs in BD Creator(TM) system donor vector.</title>
        <authorList>
            <person name="Kalnine N."/>
            <person name="Chen X."/>
            <person name="Rolfs A."/>
            <person name="Halleck A."/>
            <person name="Hines L."/>
            <person name="Eisenstein S."/>
            <person name="Koundinya M."/>
            <person name="Raphael J."/>
            <person name="Moreira D."/>
            <person name="Kelley T."/>
            <person name="LaBaer J."/>
            <person name="Lin Y."/>
            <person name="Phelan M."/>
            <person name="Farmer A."/>
        </authorList>
    </citation>
    <scope>NUCLEOTIDE SEQUENCE [LARGE SCALE MRNA] (ISOFORM 1)</scope>
</reference>
<reference key="7">
    <citation type="journal article" date="2004" name="Genome Biol.">
        <title>A genome annotation-driven approach to cloning the human ORFeome.</title>
        <authorList>
            <person name="Collins J.E."/>
            <person name="Wright C.L."/>
            <person name="Edwards C.A."/>
            <person name="Davis M.P."/>
            <person name="Grinham J.A."/>
            <person name="Cole C.G."/>
            <person name="Goward M.E."/>
            <person name="Aguado B."/>
            <person name="Mallya M."/>
            <person name="Mokrab Y."/>
            <person name="Huckle E.J."/>
            <person name="Beare D.M."/>
            <person name="Dunham I."/>
        </authorList>
    </citation>
    <scope>NUCLEOTIDE SEQUENCE [LARGE SCALE MRNA] (ISOFORM 1)</scope>
</reference>
<reference key="8">
    <citation type="journal article" date="2004" name="Nat. Genet.">
        <title>Complete sequencing and characterization of 21,243 full-length human cDNAs.</title>
        <authorList>
            <person name="Ota T."/>
            <person name="Suzuki Y."/>
            <person name="Nishikawa T."/>
            <person name="Otsuki T."/>
            <person name="Sugiyama T."/>
            <person name="Irie R."/>
            <person name="Wakamatsu A."/>
            <person name="Hayashi K."/>
            <person name="Sato H."/>
            <person name="Nagai K."/>
            <person name="Kimura K."/>
            <person name="Makita H."/>
            <person name="Sekine M."/>
            <person name="Obayashi M."/>
            <person name="Nishi T."/>
            <person name="Shibahara T."/>
            <person name="Tanaka T."/>
            <person name="Ishii S."/>
            <person name="Yamamoto J."/>
            <person name="Saito K."/>
            <person name="Kawai Y."/>
            <person name="Isono Y."/>
            <person name="Nakamura Y."/>
            <person name="Nagahari K."/>
            <person name="Murakami K."/>
            <person name="Yasuda T."/>
            <person name="Iwayanagi T."/>
            <person name="Wagatsuma M."/>
            <person name="Shiratori A."/>
            <person name="Sudo H."/>
            <person name="Hosoiri T."/>
            <person name="Kaku Y."/>
            <person name="Kodaira H."/>
            <person name="Kondo H."/>
            <person name="Sugawara M."/>
            <person name="Takahashi M."/>
            <person name="Kanda K."/>
            <person name="Yokoi T."/>
            <person name="Furuya T."/>
            <person name="Kikkawa E."/>
            <person name="Omura Y."/>
            <person name="Abe K."/>
            <person name="Kamihara K."/>
            <person name="Katsuta N."/>
            <person name="Sato K."/>
            <person name="Tanikawa M."/>
            <person name="Yamazaki M."/>
            <person name="Ninomiya K."/>
            <person name="Ishibashi T."/>
            <person name="Yamashita H."/>
            <person name="Murakawa K."/>
            <person name="Fujimori K."/>
            <person name="Tanai H."/>
            <person name="Kimata M."/>
            <person name="Watanabe M."/>
            <person name="Hiraoka S."/>
            <person name="Chiba Y."/>
            <person name="Ishida S."/>
            <person name="Ono Y."/>
            <person name="Takiguchi S."/>
            <person name="Watanabe S."/>
            <person name="Yosida M."/>
            <person name="Hotuta T."/>
            <person name="Kusano J."/>
            <person name="Kanehori K."/>
            <person name="Takahashi-Fujii A."/>
            <person name="Hara H."/>
            <person name="Tanase T.-O."/>
            <person name="Nomura Y."/>
            <person name="Togiya S."/>
            <person name="Komai F."/>
            <person name="Hara R."/>
            <person name="Takeuchi K."/>
            <person name="Arita M."/>
            <person name="Imose N."/>
            <person name="Musashino K."/>
            <person name="Yuuki H."/>
            <person name="Oshima A."/>
            <person name="Sasaki N."/>
            <person name="Aotsuka S."/>
            <person name="Yoshikawa Y."/>
            <person name="Matsunawa H."/>
            <person name="Ichihara T."/>
            <person name="Shiohata N."/>
            <person name="Sano S."/>
            <person name="Moriya S."/>
            <person name="Momiyama H."/>
            <person name="Satoh N."/>
            <person name="Takami S."/>
            <person name="Terashima Y."/>
            <person name="Suzuki O."/>
            <person name="Nakagawa S."/>
            <person name="Senoh A."/>
            <person name="Mizoguchi H."/>
            <person name="Goto Y."/>
            <person name="Shimizu F."/>
            <person name="Wakebe H."/>
            <person name="Hishigaki H."/>
            <person name="Watanabe T."/>
            <person name="Sugiyama A."/>
            <person name="Takemoto M."/>
            <person name="Kawakami B."/>
            <person name="Yamazaki M."/>
            <person name="Watanabe K."/>
            <person name="Kumagai A."/>
            <person name="Itakura S."/>
            <person name="Fukuzumi Y."/>
            <person name="Fujimori Y."/>
            <person name="Komiyama M."/>
            <person name="Tashiro H."/>
            <person name="Tanigami A."/>
            <person name="Fujiwara T."/>
            <person name="Ono T."/>
            <person name="Yamada K."/>
            <person name="Fujii Y."/>
            <person name="Ozaki K."/>
            <person name="Hirao M."/>
            <person name="Ohmori Y."/>
            <person name="Kawabata A."/>
            <person name="Hikiji T."/>
            <person name="Kobatake N."/>
            <person name="Inagaki H."/>
            <person name="Ikema Y."/>
            <person name="Okamoto S."/>
            <person name="Okitani R."/>
            <person name="Kawakami T."/>
            <person name="Noguchi S."/>
            <person name="Itoh T."/>
            <person name="Shigeta K."/>
            <person name="Senba T."/>
            <person name="Matsumura K."/>
            <person name="Nakajima Y."/>
            <person name="Mizuno T."/>
            <person name="Morinaga M."/>
            <person name="Sasaki M."/>
            <person name="Togashi T."/>
            <person name="Oyama M."/>
            <person name="Hata H."/>
            <person name="Watanabe M."/>
            <person name="Komatsu T."/>
            <person name="Mizushima-Sugano J."/>
            <person name="Satoh T."/>
            <person name="Shirai Y."/>
            <person name="Takahashi Y."/>
            <person name="Nakagawa K."/>
            <person name="Okumura K."/>
            <person name="Nagase T."/>
            <person name="Nomura N."/>
            <person name="Kikuchi H."/>
            <person name="Masuho Y."/>
            <person name="Yamashita R."/>
            <person name="Nakai K."/>
            <person name="Yada T."/>
            <person name="Nakamura Y."/>
            <person name="Ohara O."/>
            <person name="Isogai T."/>
            <person name="Sugano S."/>
        </authorList>
    </citation>
    <scope>NUCLEOTIDE SEQUENCE [LARGE SCALE MRNA] (ISOFORM 3)</scope>
    <source>
        <tissue>Testis</tissue>
    </source>
</reference>
<reference key="9">
    <citation type="journal article" date="1999" name="Nature">
        <title>The DNA sequence of human chromosome 22.</title>
        <authorList>
            <person name="Dunham I."/>
            <person name="Hunt A.R."/>
            <person name="Collins J.E."/>
            <person name="Bruskiewich R."/>
            <person name="Beare D.M."/>
            <person name="Clamp M."/>
            <person name="Smink L.J."/>
            <person name="Ainscough R."/>
            <person name="Almeida J.P."/>
            <person name="Babbage A.K."/>
            <person name="Bagguley C."/>
            <person name="Bailey J."/>
            <person name="Barlow K.F."/>
            <person name="Bates K.N."/>
            <person name="Beasley O.P."/>
            <person name="Bird C.P."/>
            <person name="Blakey S.E."/>
            <person name="Bridgeman A.M."/>
            <person name="Buck D."/>
            <person name="Burgess J."/>
            <person name="Burrill W.D."/>
            <person name="Burton J."/>
            <person name="Carder C."/>
            <person name="Carter N.P."/>
            <person name="Chen Y."/>
            <person name="Clark G."/>
            <person name="Clegg S.M."/>
            <person name="Cobley V.E."/>
            <person name="Cole C.G."/>
            <person name="Collier R.E."/>
            <person name="Connor R."/>
            <person name="Conroy D."/>
            <person name="Corby N.R."/>
            <person name="Coville G.J."/>
            <person name="Cox A.V."/>
            <person name="Davis J."/>
            <person name="Dawson E."/>
            <person name="Dhami P.D."/>
            <person name="Dockree C."/>
            <person name="Dodsworth S.J."/>
            <person name="Durbin R.M."/>
            <person name="Ellington A.G."/>
            <person name="Evans K.L."/>
            <person name="Fey J.M."/>
            <person name="Fleming K."/>
            <person name="French L."/>
            <person name="Garner A.A."/>
            <person name="Gilbert J.G.R."/>
            <person name="Goward M.E."/>
            <person name="Grafham D.V."/>
            <person name="Griffiths M.N.D."/>
            <person name="Hall C."/>
            <person name="Hall R.E."/>
            <person name="Hall-Tamlyn G."/>
            <person name="Heathcott R.W."/>
            <person name="Ho S."/>
            <person name="Holmes S."/>
            <person name="Hunt S.E."/>
            <person name="Jones M.C."/>
            <person name="Kershaw J."/>
            <person name="Kimberley A.M."/>
            <person name="King A."/>
            <person name="Laird G.K."/>
            <person name="Langford C.F."/>
            <person name="Leversha M.A."/>
            <person name="Lloyd C."/>
            <person name="Lloyd D.M."/>
            <person name="Martyn I.D."/>
            <person name="Mashreghi-Mohammadi M."/>
            <person name="Matthews L.H."/>
            <person name="Mccann O.T."/>
            <person name="Mcclay J."/>
            <person name="Mclaren S."/>
            <person name="McMurray A.A."/>
            <person name="Milne S.A."/>
            <person name="Mortimore B.J."/>
            <person name="Odell C.N."/>
            <person name="Pavitt R."/>
            <person name="Pearce A.V."/>
            <person name="Pearson D."/>
            <person name="Phillimore B.J.C.T."/>
            <person name="Phillips S.H."/>
            <person name="Plumb R.W."/>
            <person name="Ramsay H."/>
            <person name="Ramsey Y."/>
            <person name="Rogers L."/>
            <person name="Ross M.T."/>
            <person name="Scott C.E."/>
            <person name="Sehra H.K."/>
            <person name="Skuce C.D."/>
            <person name="Smalley S."/>
            <person name="Smith M.L."/>
            <person name="Soderlund C."/>
            <person name="Spragon L."/>
            <person name="Steward C.A."/>
            <person name="Sulston J.E."/>
            <person name="Swann R.M."/>
            <person name="Vaudin M."/>
            <person name="Wall M."/>
            <person name="Wallis J.M."/>
            <person name="Whiteley M.N."/>
            <person name="Willey D.L."/>
            <person name="Williams L."/>
            <person name="Williams S.A."/>
            <person name="Williamson H."/>
            <person name="Wilmer T.E."/>
            <person name="Wilming L."/>
            <person name="Wright C.L."/>
            <person name="Hubbard T."/>
            <person name="Bentley D.R."/>
            <person name="Beck S."/>
            <person name="Rogers J."/>
            <person name="Shimizu N."/>
            <person name="Minoshima S."/>
            <person name="Kawasaki K."/>
            <person name="Sasaki T."/>
            <person name="Asakawa S."/>
            <person name="Kudoh J."/>
            <person name="Shintani A."/>
            <person name="Shibuya K."/>
            <person name="Yoshizaki Y."/>
            <person name="Aoki N."/>
            <person name="Mitsuyama S."/>
            <person name="Roe B.A."/>
            <person name="Chen F."/>
            <person name="Chu L."/>
            <person name="Crabtree J."/>
            <person name="Deschamps S."/>
            <person name="Do A."/>
            <person name="Do T."/>
            <person name="Dorman A."/>
            <person name="Fang F."/>
            <person name="Fu Y."/>
            <person name="Hu P."/>
            <person name="Hua A."/>
            <person name="Kenton S."/>
            <person name="Lai H."/>
            <person name="Lao H.I."/>
            <person name="Lewis J."/>
            <person name="Lewis S."/>
            <person name="Lin S.-P."/>
            <person name="Loh P."/>
            <person name="Malaj E."/>
            <person name="Nguyen T."/>
            <person name="Pan H."/>
            <person name="Phan S."/>
            <person name="Qi S."/>
            <person name="Qian Y."/>
            <person name="Ray L."/>
            <person name="Ren Q."/>
            <person name="Shaull S."/>
            <person name="Sloan D."/>
            <person name="Song L."/>
            <person name="Wang Q."/>
            <person name="Wang Y."/>
            <person name="Wang Z."/>
            <person name="White J."/>
            <person name="Willingham D."/>
            <person name="Wu H."/>
            <person name="Yao Z."/>
            <person name="Zhan M."/>
            <person name="Zhang G."/>
            <person name="Chissoe S."/>
            <person name="Murray J."/>
            <person name="Miller N."/>
            <person name="Minx P."/>
            <person name="Fulton R."/>
            <person name="Johnson D."/>
            <person name="Bemis G."/>
            <person name="Bentley D."/>
            <person name="Bradshaw H."/>
            <person name="Bourne S."/>
            <person name="Cordes M."/>
            <person name="Du Z."/>
            <person name="Fulton L."/>
            <person name="Goela D."/>
            <person name="Graves T."/>
            <person name="Hawkins J."/>
            <person name="Hinds K."/>
            <person name="Kemp K."/>
            <person name="Latreille P."/>
            <person name="Layman D."/>
            <person name="Ozersky P."/>
            <person name="Rohlfing T."/>
            <person name="Scheet P."/>
            <person name="Walker C."/>
            <person name="Wamsley A."/>
            <person name="Wohldmann P."/>
            <person name="Pepin K."/>
            <person name="Nelson J."/>
            <person name="Korf I."/>
            <person name="Bedell J.A."/>
            <person name="Hillier L.W."/>
            <person name="Mardis E."/>
            <person name="Waterston R."/>
            <person name="Wilson R."/>
            <person name="Emanuel B.S."/>
            <person name="Shaikh T."/>
            <person name="Kurahashi H."/>
            <person name="Saitta S."/>
            <person name="Budarf M.L."/>
            <person name="McDermid H.E."/>
            <person name="Johnson A."/>
            <person name="Wong A.C.C."/>
            <person name="Morrow B.E."/>
            <person name="Edelmann L."/>
            <person name="Kim U.J."/>
            <person name="Shizuya H."/>
            <person name="Simon M.I."/>
            <person name="Dumanski J.P."/>
            <person name="Peyrard M."/>
            <person name="Kedra D."/>
            <person name="Seroussi E."/>
            <person name="Fransson I."/>
            <person name="Tapia I."/>
            <person name="Bruder C.E."/>
            <person name="O'Brien K.P."/>
            <person name="Wilkinson P."/>
            <person name="Bodenteich A."/>
            <person name="Hartman K."/>
            <person name="Hu X."/>
            <person name="Khan A.S."/>
            <person name="Lane L."/>
            <person name="Tilahun Y."/>
            <person name="Wright H."/>
        </authorList>
    </citation>
    <scope>NUCLEOTIDE SEQUENCE [LARGE SCALE GENOMIC DNA]</scope>
</reference>
<reference key="10">
    <citation type="journal article" date="2004" name="Genome Res.">
        <title>The status, quality, and expansion of the NIH full-length cDNA project: the Mammalian Gene Collection (MGC).</title>
        <authorList>
            <consortium name="The MGC Project Team"/>
        </authorList>
    </citation>
    <scope>NUCLEOTIDE SEQUENCE [LARGE SCALE MRNA] (ISOFORM 1)</scope>
    <source>
        <tissue>Placenta</tissue>
    </source>
</reference>
<reference key="11">
    <citation type="journal article" date="1987" name="Proc. Natl. Acad. Sci. U.S.A.">
        <title>Molecular cloning of cDNAs of human liver and placenta NADH-cytochrome b5 reductase.</title>
        <authorList>
            <person name="Yubisui T."/>
            <person name="Naitoh Y."/>
            <person name="Zenno S."/>
            <person name="Tamura M."/>
            <person name="Takeshita M."/>
            <person name="Sakaki Y."/>
        </authorList>
    </citation>
    <scope>NUCLEOTIDE SEQUENCE [MRNA] OF 8-301 (ISOFORM 1)</scope>
    <scope>VARIANT PRO-66</scope>
    <source>
        <tissue>Liver</tissue>
    </source>
</reference>
<reference key="12">
    <citation type="submission" date="2001-04" db="EMBL/GenBank/DDBJ databases">
        <title>Upregulation of voltage-gated Na+ channel expression and metastatic potential in human breast cancer: correlative studies on cell lines and biopsy tissues.</title>
        <authorList>
            <person name="Diss J.K.J."/>
            <person name="Fraser S.P."/>
            <person name="Coombes R.C."/>
            <person name="Djamgoz M.B.A."/>
        </authorList>
    </citation>
    <scope>NUCLEOTIDE SEQUENCE [MRNA] OF 101-250 (ISOFORM 1)</scope>
</reference>
<reference key="13">
    <citation type="journal article" date="1989" name="J. Biochem.">
        <title>The NH2-terminal structures of human and rat liver microsomal NADH-cytochrome b5 reductases.</title>
        <authorList>
            <person name="Murakami K."/>
            <person name="Yubisui T."/>
            <person name="Takeshita M."/>
            <person name="Miyata T."/>
        </authorList>
    </citation>
    <scope>PROTEIN SEQUENCE OF 2-25</scope>
    <scope>MYRISTOYLATION AT GLY-2</scope>
</reference>
<reference key="14">
    <citation type="journal article" date="1986" name="J. Biochem.">
        <title>Complete amino acid sequence of NADH-cytochrome b5 reductase purified from human erythrocytes.</title>
        <authorList>
            <person name="Yubisui T."/>
            <person name="Miyata T."/>
            <person name="Iwanaga S."/>
            <person name="Tamura M."/>
            <person name="Takeshita M."/>
        </authorList>
    </citation>
    <scope>PROTEIN SEQUENCE OF 27-301</scope>
    <source>
        <tissue>Erythrocyte</tissue>
    </source>
</reference>
<reference key="15">
    <citation type="journal article" date="1984" name="J. Biochem.">
        <title>Amino acid sequence of NADH-cytochrome b5 reductase of human erythrocytes.</title>
        <authorList>
            <person name="Yubisui T."/>
            <person name="Miyata T."/>
            <person name="Iwanaga S."/>
            <person name="Tamura M."/>
            <person name="Yoshida S."/>
            <person name="Takeshita M."/>
            <person name="Nakajima H."/>
        </authorList>
    </citation>
    <scope>PROTEIN SEQUENCE OF 27-301</scope>
    <source>
        <tissue>Erythrocyte</tissue>
    </source>
</reference>
<reference key="16">
    <citation type="journal article" date="1998" name="Blood">
        <title>An erythroid-specific transcript generates the soluble form of NADH-cytochrome b5 reductase in humans.</title>
        <authorList>
            <person name="Bulbarelli A."/>
            <person name="Valentini A."/>
            <person name="De Silvestris M."/>
            <person name="Cappellini M.D."/>
            <person name="Borgese N."/>
        </authorList>
    </citation>
    <scope>ALTERNATIVE PROMOTER USAGE</scope>
    <scope>FUNCTION</scope>
    <scope>CATALYTIC ACTIVITY (ISOFORMS 1 AND 2)</scope>
    <scope>SUBCELLULAR LOCATION (ISOFORMS 1 AND 2)</scope>
    <scope>TISSUE SPECIFICITY (ISOFORM 2)</scope>
</reference>
<reference key="17">
    <citation type="journal article" date="1991" name="J. Biol. Chem.">
        <title>Role of cysteine residues in human NADH-cytochrome b5 reductase studied by site-directed mutagenesis. Cys-273 and Cys-283 are located close to the NADH-binding site but are not catalytically essential.</title>
        <authorList>
            <person name="Shirabe K."/>
            <person name="Yubisui T."/>
            <person name="Nishino T."/>
            <person name="Takeshita M."/>
        </authorList>
    </citation>
    <scope>CATALYTIC ACTIVITY</scope>
    <scope>BIOPHYSICOCHEMICAL PROPERTIES</scope>
    <scope>MUTAGENESIS OF CYS-204; CYS-274; CYS-284 AND CYS-298</scope>
    <scope>FUNCTION</scope>
</reference>
<reference key="18">
    <citation type="journal article" date="2008" name="Proc. Natl. Acad. Sci. U.S.A.">
        <title>A quantitative atlas of mitotic phosphorylation.</title>
        <authorList>
            <person name="Dephoure N."/>
            <person name="Zhou C."/>
            <person name="Villen J."/>
            <person name="Beausoleil S.A."/>
            <person name="Bakalarski C.E."/>
            <person name="Elledge S.J."/>
            <person name="Gygi S.P."/>
        </authorList>
    </citation>
    <scope>PHOSPHORYLATION [LARGE SCALE ANALYSIS] AT TYR-43</scope>
    <scope>IDENTIFICATION BY MASS SPECTROMETRY [LARGE SCALE ANALYSIS]</scope>
    <source>
        <tissue>Cervix carcinoma</tissue>
    </source>
</reference>
<reference key="19">
    <citation type="journal article" date="2009" name="Science">
        <title>Lysine acetylation targets protein complexes and co-regulates major cellular functions.</title>
        <authorList>
            <person name="Choudhary C."/>
            <person name="Kumar C."/>
            <person name="Gnad F."/>
            <person name="Nielsen M.L."/>
            <person name="Rehman M."/>
            <person name="Walther T.C."/>
            <person name="Olsen J.V."/>
            <person name="Mann M."/>
        </authorList>
    </citation>
    <scope>ACETYLATION [LARGE SCALE ANALYSIS] AT LYS-42</scope>
    <scope>IDENTIFICATION BY MASS SPECTROMETRY [LARGE SCALE ANALYSIS]</scope>
</reference>
<reference key="20">
    <citation type="journal article" date="2011" name="BMC Syst. Biol.">
        <title>Initial characterization of the human central proteome.</title>
        <authorList>
            <person name="Burkard T.R."/>
            <person name="Planyavsky M."/>
            <person name="Kaupe I."/>
            <person name="Breitwieser F.P."/>
            <person name="Buerckstuemmer T."/>
            <person name="Bennett K.L."/>
            <person name="Superti-Furga G."/>
            <person name="Colinge J."/>
        </authorList>
    </citation>
    <scope>IDENTIFICATION BY MASS SPECTROMETRY [LARGE SCALE ANALYSIS]</scope>
</reference>
<reference key="21">
    <citation type="journal article" date="2014" name="J. Proteomics">
        <title>An enzyme assisted RP-RPLC approach for in-depth analysis of human liver phosphoproteome.</title>
        <authorList>
            <person name="Bian Y."/>
            <person name="Song C."/>
            <person name="Cheng K."/>
            <person name="Dong M."/>
            <person name="Wang F."/>
            <person name="Huang J."/>
            <person name="Sun D."/>
            <person name="Wang L."/>
            <person name="Ye M."/>
            <person name="Zou H."/>
        </authorList>
    </citation>
    <scope>IDENTIFICATION BY MASS SPECTROMETRY [LARGE SCALE ANALYSIS]</scope>
    <source>
        <tissue>Liver</tissue>
    </source>
</reference>
<reference key="22">
    <citation type="journal article" date="2014" name="Nat. Commun.">
        <title>Global profiling of co- and post-translationally N-myristoylated proteomes in human cells.</title>
        <authorList>
            <person name="Thinon E."/>
            <person name="Serwa R.A."/>
            <person name="Broncel M."/>
            <person name="Brannigan J.A."/>
            <person name="Brassat U."/>
            <person name="Wright M.H."/>
            <person name="Heal W.P."/>
            <person name="Wilkinson A.J."/>
            <person name="Mann D.J."/>
            <person name="Tate E.W."/>
        </authorList>
    </citation>
    <scope>MYRISTOYLATION AT GLY-2</scope>
    <scope>CLEAVAGE OF INITIATOR METHIONINE</scope>
    <scope>IDENTIFICATION BY MASS SPECTROMETRY</scope>
</reference>
<reference key="23">
    <citation type="journal article" date="2015" name="Proteomics">
        <title>N-terminome analysis of the human mitochondrial proteome.</title>
        <authorList>
            <person name="Vaca Jacome A.S."/>
            <person name="Rabilloud T."/>
            <person name="Schaeffer-Reiss C."/>
            <person name="Rompais M."/>
            <person name="Ayoub D."/>
            <person name="Lane L."/>
            <person name="Bairoch A."/>
            <person name="Van Dorsselaer A."/>
            <person name="Carapito C."/>
        </authorList>
    </citation>
    <scope>IDENTIFICATION BY MASS SPECTROMETRY [LARGE SCALE ANALYSIS]</scope>
</reference>
<reference key="24">
    <citation type="journal article" date="2004" name="Acta Crystallogr. D">
        <title>Structure of human erythrocyte NADH-cytochrome b5 reductase.</title>
        <authorList>
            <person name="Bando S."/>
            <person name="Takano T."/>
            <person name="Yubisui T."/>
            <person name="Shirabe K."/>
            <person name="Takeshita M."/>
            <person name="Nakagawa A."/>
        </authorList>
    </citation>
    <scope>X-RAY CRYSTALLOGRAPHY (1.75 ANGSTROMS) OF 27-301 IN COMPLEX WITH FAD</scope>
    <scope>FAD-BINDING</scope>
</reference>
<reference key="25">
    <citation type="journal article" date="1991" name="J. Biol. Chem.">
        <title>Structural role of serine 127 in the NADH-binding site of human NADH-cytochrome b5 reductase.</title>
        <authorList>
            <person name="Yubisui T."/>
            <person name="Shirabe K."/>
            <person name="Takeshita M."/>
            <person name="Kobayashi Y."/>
            <person name="Fukumaki Y."/>
            <person name="Sakaki Y."/>
            <person name="Takano T."/>
        </authorList>
    </citation>
    <scope>VARIANT METHB-CYB5R3 PRO-128</scope>
    <scope>MUTAGENESIS OF SER-128</scope>
    <scope>CHARACTERIZATION OF VARIANT METHB-CYB5R3 PRO-128</scope>
    <scope>CATALYTIC ACTIVITY</scope>
    <scope>COFACTOR</scope>
    <scope>BIOPHYSICOCHEMICAL PROPERTIES</scope>
    <scope>FUNCTION</scope>
</reference>
<reference key="26">
    <citation type="journal article" date="1991" name="Am. J. Hum. Genet.">
        <title>Exonic point mutations in NADH-cytochrome B5 reductase genes of homozygotes for hereditary methemoglobinemia, types I and III: putative mechanisms of tissue-dependent enzyme deficiency.</title>
        <authorList>
            <person name="Katsube T."/>
            <person name="Sakamoto N."/>
            <person name="Kobayashi Y."/>
            <person name="Seki R."/>
            <person name="Hirano M."/>
            <person name="Tanishima K."/>
            <person name="Tomoda A."/>
            <person name="Takazakura E."/>
            <person name="Yubisui T."/>
            <person name="Takeshita M."/>
            <person name="Sakaki Y."/>
            <person name="Fukumaki Y."/>
        </authorList>
    </citation>
    <scope>VARIANTS METHB-CYB5R3 GLN-58 AND PRO-149</scope>
</reference>
<reference key="27">
    <citation type="journal article" date="1992" name="J. Biol. Chem.">
        <title>Enzymatic instability of NADH-cytochrome b5 reductase as a cause of hereditary methemoglobinemia type I (red cell type).</title>
        <authorList>
            <person name="Shirabe K."/>
            <person name="Yubisui T."/>
            <person name="Borgese N."/>
            <person name="Tang C.-Y."/>
            <person name="Hultquist D.E."/>
            <person name="Takeshita M."/>
        </authorList>
    </citation>
    <scope>VARIANTS METHB-CYB5R3 GLN-58 AND MET-106</scope>
    <scope>CHARACTERIZATION OF VARIANTS METHB-CYB5R3 GLN-58 AND MET-106</scope>
    <scope>FUNCTION</scope>
    <scope>CATALYTIC ACTIVITY</scope>
    <scope>BIOPHYSICOCHEMICAL PROPERTIES</scope>
</reference>
<reference key="28">
    <citation type="journal article" date="1994" name="J. Biol. Chem.">
        <title>An in-frame deletion of codon 298 of the NADH-cytochrome b5 reductase gene results in hereditary methemoglobinemia type II (generalized type). A functional implication for the role of the COOH-terminal region of the enzyme.</title>
        <authorList>
            <person name="Shirabe K."/>
            <person name="Fujimoto Y."/>
            <person name="Yubisui T."/>
            <person name="Takeshita M."/>
        </authorList>
    </citation>
    <scope>VARIANT METHB-CYB5R3 PHE-299 DEL</scope>
    <scope>CHARACTERIZATION OF VARIANT METHB-CYB5R3 PHE-299 DEL</scope>
    <scope>MUTAGENESIS OF 299-PHE--PHE-301; PHE-299 AND PHE-301</scope>
    <scope>CATALYTIC ACTIVITY</scope>
    <scope>BIOPHYSICOCHEMICAL PROPERTIES</scope>
    <scope>FUNCTION</scope>
</reference>
<reference key="29">
    <citation type="journal article" date="1995" name="Blood">
        <title>Four new mutations in the NADH-cytochrome b5 reductase gene from patients with recessive congenital methemoglobinemia type II.</title>
        <authorList>
            <person name="Vieira L.M."/>
            <person name="Kaplan J.-C."/>
            <person name="Kahn A."/>
            <person name="Leroux A."/>
        </authorList>
    </citation>
    <scope>VARIANTS METHB-CYB5R3 ARG-204 AND MET-273 DEL</scope>
</reference>
<reference key="30">
    <citation type="journal article" date="1997" name="Hum. Genet.">
        <title>A high-frequency polymorphism of NADH-cytochrome b5 reductase in African-Americans.</title>
        <authorList>
            <person name="Jenkins M.M."/>
            <person name="Prchal J.T."/>
        </authorList>
    </citation>
    <scope>VARIANT SER-117</scope>
</reference>
<reference key="31">
    <citation type="journal article" date="1998" name="Br. J. Haematol.">
        <title>Identification of a novel point mutation (Leu72-to-Pro) in the NADH-cytochrome b5 reductase gene of a patient with hereditary methaemoglobinaemia type I.</title>
        <authorList>
            <person name="Wu Y.-S."/>
            <person name="Huang C.-H."/>
            <person name="Wan Y."/>
            <person name="Huang Q.-J."/>
            <person name="Zhu Z.-Y."/>
        </authorList>
    </citation>
    <scope>VARIANT METHB-CYB5R3 PRO-73</scope>
</reference>
<reference key="32">
    <citation type="journal article" date="1998" name="Br. J. Haematol.">
        <title>Molecular basis of hereditary methaemoglobinaemia, types I and II: two novel mutations in the NADH-cytochrome b5 reductase gene.</title>
        <authorList>
            <person name="Higasa K."/>
            <person name="Manabe J.I."/>
            <person name="Yubisui T."/>
            <person name="Sumimoto H."/>
            <person name="Pung-Amritt P."/>
            <person name="Tanphaichitr V.S."/>
            <person name="Fukumaki Y."/>
        </authorList>
    </citation>
    <scope>NUCLEOTIDE SEQUENCE [GENOMIC DNA] OF 76-83 AND 171-187</scope>
    <scope>VARIANT METHB-CYB5R3 VAL-179</scope>
</reference>
<reference key="33">
    <citation type="journal article" date="2000" name="Blood">
        <title>A novel mutation in the NADH-cytochrome b5 reductase gene of a Chinese patient with recessive congenital methemoglobinemia.</title>
        <authorList>
            <person name="Wang Y."/>
            <person name="Wu Y.-S."/>
            <person name="Zheng P.-Z."/>
            <person name="Yang W.-X."/>
            <person name="Fang G.-A."/>
            <person name="Tang Y.-C."/>
            <person name="Xie F."/>
            <person name="Lan F.-H."/>
            <person name="Zhu Z.-Y."/>
        </authorList>
    </citation>
    <scope>VARIANT METHB-CYB5R3 TYR-204</scope>
    <scope>CHARACTERIZATION VARIANT METHB-CYB5R3 TYR-204</scope>
    <scope>CATALYTIC ACTIVITY</scope>
    <scope>FUNCTION</scope>
</reference>
<reference key="34">
    <citation type="journal article" date="1997" name="Zhonghua Xue Ye Xue Za Zhi">
        <title>Arginine-glutamine replacement at residue 57 of NADH-cytochrome b5 reductase in Chinese hereditary methemoglobinemia.</title>
        <authorList>
            <person name="Huang C.-H."/>
            <person name="Xie Y."/>
            <person name="Wang Y."/>
            <person name="Wu Y.-S."/>
        </authorList>
    </citation>
    <scope>VARIANT METHB-CYB5R3 GLN-58</scope>
</reference>
<reference key="35">
    <citation type="journal article" date="2002" name="Blood">
        <title>Familial idiopathic methemoglobinemia revisited: original cases reveal 2 novel mutations in NADH-cytochrome b5 reductase.</title>
        <authorList>
            <person name="Percy M.J."/>
            <person name="Gillespie M.J.S."/>
            <person name="Savage G."/>
            <person name="Hughes A.E."/>
            <person name="McMullin M.F."/>
            <person name="Lappin T.R.J."/>
        </authorList>
    </citation>
    <scope>VARIANTS METHB-CYB5R3 GLU-256 DEL AND ASP-292</scope>
</reference>
<reference key="36">
    <citation type="journal article" date="2005" name="Br. J. Haematol.">
        <title>Recessive congenital methaemoglobinaemia: functional characterization of the novel D239G mutation in the NADH-binding lobe of cytochrome b5 reductase.</title>
        <authorList>
            <person name="Percy M.J."/>
            <person name="Crowley L.J."/>
            <person name="Davis C.A."/>
            <person name="McMullin M.F."/>
            <person name="Savage G."/>
            <person name="Hughes J."/>
            <person name="McMahon C."/>
            <person name="Quinn R.J.M."/>
            <person name="Smith O."/>
            <person name="Barber M.J."/>
            <person name="Lappin T.R.J."/>
        </authorList>
    </citation>
    <scope>CHARACTERIZATION OF VARIANTS METHB-CYB5R3 GLU-256 DEL AND ASP-292</scope>
    <scope>CATALYTIC ACTIVITY</scope>
    <scope>COFACTOR</scope>
    <scope>FUNCTION</scope>
    <scope>BIOPHYSICOCHEMICAL PROPERTIES</scope>
</reference>
<dbReference type="EC" id="1.6.2.2" evidence="5 7 10 12 13 19 21"/>
<dbReference type="EMBL" id="M28713">
    <property type="protein sequence ID" value="AAA59900.1"/>
    <property type="molecule type" value="Genomic_DNA"/>
</dbReference>
<dbReference type="EMBL" id="M28705">
    <property type="protein sequence ID" value="AAA59900.1"/>
    <property type="status" value="JOINED"/>
    <property type="molecule type" value="Genomic_DNA"/>
</dbReference>
<dbReference type="EMBL" id="M28706">
    <property type="protein sequence ID" value="AAA59900.1"/>
    <property type="status" value="JOINED"/>
    <property type="molecule type" value="Genomic_DNA"/>
</dbReference>
<dbReference type="EMBL" id="M28707">
    <property type="protein sequence ID" value="AAA59900.1"/>
    <property type="status" value="JOINED"/>
    <property type="molecule type" value="Genomic_DNA"/>
</dbReference>
<dbReference type="EMBL" id="M28708">
    <property type="protein sequence ID" value="AAA59900.1"/>
    <property type="status" value="JOINED"/>
    <property type="molecule type" value="Genomic_DNA"/>
</dbReference>
<dbReference type="EMBL" id="M28709">
    <property type="protein sequence ID" value="AAA59900.1"/>
    <property type="status" value="JOINED"/>
    <property type="molecule type" value="Genomic_DNA"/>
</dbReference>
<dbReference type="EMBL" id="M28710">
    <property type="protein sequence ID" value="AAA59900.1"/>
    <property type="status" value="JOINED"/>
    <property type="molecule type" value="Genomic_DNA"/>
</dbReference>
<dbReference type="EMBL" id="M28711">
    <property type="protein sequence ID" value="AAA59900.1"/>
    <property type="status" value="JOINED"/>
    <property type="molecule type" value="Genomic_DNA"/>
</dbReference>
<dbReference type="EMBL" id="Y09501">
    <property type="protein sequence ID" value="CAA70696.1"/>
    <property type="molecule type" value="mRNA"/>
</dbReference>
<dbReference type="EMBL" id="AF361370">
    <property type="protein sequence ID" value="AAL87744.1"/>
    <property type="molecule type" value="mRNA"/>
</dbReference>
<dbReference type="EMBL" id="AJ010116">
    <property type="protein sequence ID" value="CAA09006.1"/>
    <property type="molecule type" value="mRNA"/>
</dbReference>
<dbReference type="EMBL" id="AJ010117">
    <property type="protein sequence ID" value="CAA09007.1"/>
    <property type="molecule type" value="mRNA"/>
</dbReference>
<dbReference type="EMBL" id="AJ010118">
    <property type="protein sequence ID" value="CAA09008.1"/>
    <property type="molecule type" value="mRNA"/>
</dbReference>
<dbReference type="EMBL" id="AY341030">
    <property type="protein sequence ID" value="AAP88936.1"/>
    <property type="molecule type" value="Genomic_DNA"/>
</dbReference>
<dbReference type="EMBL" id="BT009821">
    <property type="protein sequence ID" value="AAP88823.1"/>
    <property type="molecule type" value="mRNA"/>
</dbReference>
<dbReference type="EMBL" id="CR456435">
    <property type="protein sequence ID" value="CAG30321.1"/>
    <property type="molecule type" value="mRNA"/>
</dbReference>
<dbReference type="EMBL" id="AF061830">
    <property type="protein sequence ID" value="AAF06818.1"/>
    <property type="molecule type" value="Genomic_DNA"/>
</dbReference>
<dbReference type="EMBL" id="AF061831">
    <property type="protein sequence ID" value="AAF06819.1"/>
    <property type="molecule type" value="Genomic_DNA"/>
</dbReference>
<dbReference type="EMBL" id="AK302204">
    <property type="protein sequence ID" value="BAH13649.1"/>
    <property type="molecule type" value="mRNA"/>
</dbReference>
<dbReference type="EMBL" id="Z93241">
    <property type="status" value="NOT_ANNOTATED_CDS"/>
    <property type="molecule type" value="Genomic_DNA"/>
</dbReference>
<dbReference type="EMBL" id="BC004821">
    <property type="protein sequence ID" value="AAH04821.1"/>
    <property type="molecule type" value="mRNA"/>
</dbReference>
<dbReference type="EMBL" id="AJ310899">
    <property type="protein sequence ID" value="CAC84523.1"/>
    <property type="molecule type" value="mRNA"/>
</dbReference>
<dbReference type="EMBL" id="AJ310900">
    <property type="protein sequence ID" value="CAC84524.1"/>
    <property type="molecule type" value="mRNA"/>
</dbReference>
<dbReference type="EMBL" id="M16461">
    <property type="protein sequence ID" value="AAA52306.1"/>
    <property type="molecule type" value="mRNA"/>
</dbReference>
<dbReference type="EMBL" id="M16462">
    <property type="protein sequence ID" value="AAA52307.1"/>
    <property type="molecule type" value="mRNA"/>
</dbReference>
<dbReference type="CCDS" id="CCDS14040.1">
    <molecule id="P00387-2"/>
</dbReference>
<dbReference type="CCDS" id="CCDS33658.1">
    <molecule id="P00387-1"/>
</dbReference>
<dbReference type="CCDS" id="CCDS54535.1">
    <molecule id="P00387-3"/>
</dbReference>
<dbReference type="PIR" id="JS0468">
    <property type="entry name" value="RDHUB5"/>
</dbReference>
<dbReference type="RefSeq" id="NP_000389.1">
    <molecule id="P00387-1"/>
    <property type="nucleotide sequence ID" value="NM_000398.7"/>
</dbReference>
<dbReference type="RefSeq" id="NP_001123291.1">
    <molecule id="P00387-2"/>
    <property type="nucleotide sequence ID" value="NM_001129819.2"/>
</dbReference>
<dbReference type="RefSeq" id="NP_001165131.1">
    <molecule id="P00387-3"/>
    <property type="nucleotide sequence ID" value="NM_001171660.2"/>
</dbReference>
<dbReference type="RefSeq" id="NP_001165132.1">
    <molecule id="P00387-2"/>
    <property type="nucleotide sequence ID" value="NM_001171661.1"/>
</dbReference>
<dbReference type="RefSeq" id="NP_015565.1">
    <molecule id="P00387-2"/>
    <property type="nucleotide sequence ID" value="NM_007326.4"/>
</dbReference>
<dbReference type="PDB" id="1UMK">
    <property type="method" value="X-ray"/>
    <property type="resolution" value="1.75 A"/>
    <property type="chains" value="A=27-301"/>
</dbReference>
<dbReference type="PDB" id="7THG">
    <property type="method" value="X-ray"/>
    <property type="resolution" value="2.90 A"/>
    <property type="chains" value="A=28-301"/>
</dbReference>
<dbReference type="PDB" id="7TNV">
    <property type="method" value="X-ray"/>
    <property type="resolution" value="1.93 A"/>
    <property type="chains" value="A=28-301"/>
</dbReference>
<dbReference type="PDB" id="7TSW">
    <property type="method" value="X-ray"/>
    <property type="resolution" value="2.40 A"/>
    <property type="chains" value="A/B/C/D/E/F=28-301"/>
</dbReference>
<dbReference type="PDB" id="7W3O">
    <property type="method" value="X-ray"/>
    <property type="resolution" value="2.46 A"/>
    <property type="chains" value="A/B/C/D/E=27-301"/>
</dbReference>
<dbReference type="PDBsum" id="1UMK"/>
<dbReference type="PDBsum" id="7THG"/>
<dbReference type="PDBsum" id="7TNV"/>
<dbReference type="PDBsum" id="7TSW"/>
<dbReference type="PDBsum" id="7W3O"/>
<dbReference type="SMR" id="P00387"/>
<dbReference type="BioGRID" id="108071">
    <property type="interactions" value="353"/>
</dbReference>
<dbReference type="DIP" id="DIP-50463N"/>
<dbReference type="FunCoup" id="P00387">
    <property type="interactions" value="1921"/>
</dbReference>
<dbReference type="IntAct" id="P00387">
    <property type="interactions" value="151"/>
</dbReference>
<dbReference type="MINT" id="P00387"/>
<dbReference type="STRING" id="9606.ENSP00000354468"/>
<dbReference type="ChEMBL" id="CHEMBL2146"/>
<dbReference type="DrugBank" id="DB09130">
    <property type="generic name" value="Copper"/>
</dbReference>
<dbReference type="DrugBank" id="DB03147">
    <property type="generic name" value="Flavin adenine dinucleotide"/>
</dbReference>
<dbReference type="DrugBank" id="DB00157">
    <property type="generic name" value="NADH"/>
</dbReference>
<dbReference type="GlyCosmos" id="P00387">
    <property type="glycosylation" value="2 sites, 1 glycan"/>
</dbReference>
<dbReference type="GlyGen" id="P00387">
    <property type="glycosylation" value="3 sites, 1 N-linked glycan (1 site), 1 O-linked glycan (2 sites)"/>
</dbReference>
<dbReference type="iPTMnet" id="P00387"/>
<dbReference type="MetOSite" id="P00387"/>
<dbReference type="PhosphoSitePlus" id="P00387"/>
<dbReference type="SwissPalm" id="P00387"/>
<dbReference type="BioMuta" id="CYB5R3"/>
<dbReference type="DMDM" id="127846"/>
<dbReference type="REPRODUCTION-2DPAGE" id="IPI00446235"/>
<dbReference type="CPTAC" id="CPTAC-55"/>
<dbReference type="CPTAC" id="CPTAC-56"/>
<dbReference type="jPOST" id="P00387"/>
<dbReference type="MassIVE" id="P00387"/>
<dbReference type="PaxDb" id="9606-ENSP00000354468"/>
<dbReference type="PeptideAtlas" id="P00387"/>
<dbReference type="ProteomicsDB" id="51238">
    <molecule id="P00387-1"/>
</dbReference>
<dbReference type="ProteomicsDB" id="51239">
    <molecule id="P00387-2"/>
</dbReference>
<dbReference type="ProteomicsDB" id="51240">
    <molecule id="P00387-3"/>
</dbReference>
<dbReference type="Pumba" id="P00387"/>
<dbReference type="TopDownProteomics" id="P00387-1">
    <molecule id="P00387-1"/>
</dbReference>
<dbReference type="TopDownProteomics" id="P00387-2">
    <molecule id="P00387-2"/>
</dbReference>
<dbReference type="Antibodypedia" id="219">
    <property type="antibodies" value="454 antibodies from 35 providers"/>
</dbReference>
<dbReference type="DNASU" id="1727"/>
<dbReference type="Ensembl" id="ENST00000352397.10">
    <molecule id="P00387-1"/>
    <property type="protein sequence ID" value="ENSP00000338461.6"/>
    <property type="gene ID" value="ENSG00000100243.22"/>
</dbReference>
<dbReference type="Ensembl" id="ENST00000402438.6">
    <molecule id="P00387-2"/>
    <property type="protein sequence ID" value="ENSP00000385679.1"/>
    <property type="gene ID" value="ENSG00000100243.22"/>
</dbReference>
<dbReference type="Ensembl" id="ENST00000407623.8">
    <molecule id="P00387-2"/>
    <property type="protein sequence ID" value="ENSP00000384834.3"/>
    <property type="gene ID" value="ENSG00000100243.22"/>
</dbReference>
<dbReference type="Ensembl" id="ENST00000687198.1">
    <molecule id="P00387-2"/>
    <property type="protein sequence ID" value="ENSP00000508492.1"/>
    <property type="gene ID" value="ENSG00000100243.22"/>
</dbReference>
<dbReference type="Ensembl" id="ENST00000688117.1">
    <molecule id="P00387-3"/>
    <property type="protein sequence ID" value="ENSP00000509015.1"/>
    <property type="gene ID" value="ENSG00000100243.22"/>
</dbReference>
<dbReference type="Ensembl" id="ENST00000692152.1">
    <molecule id="P00387-2"/>
    <property type="protein sequence ID" value="ENSP00000509317.1"/>
    <property type="gene ID" value="ENSG00000100243.22"/>
</dbReference>
<dbReference type="GeneID" id="1727"/>
<dbReference type="KEGG" id="hsa:1727"/>
<dbReference type="MANE-Select" id="ENST00000352397.10">
    <property type="protein sequence ID" value="ENSP00000338461.6"/>
    <property type="RefSeq nucleotide sequence ID" value="NM_000398.7"/>
    <property type="RefSeq protein sequence ID" value="NP_000389.1"/>
</dbReference>
<dbReference type="UCSC" id="uc003bcx.4">
    <molecule id="P00387-1"/>
    <property type="organism name" value="human"/>
</dbReference>
<dbReference type="AGR" id="HGNC:2873"/>
<dbReference type="CTD" id="1727"/>
<dbReference type="DisGeNET" id="1727"/>
<dbReference type="GeneCards" id="CYB5R3"/>
<dbReference type="HGNC" id="HGNC:2873">
    <property type="gene designation" value="CYB5R3"/>
</dbReference>
<dbReference type="HPA" id="ENSG00000100243">
    <property type="expression patterns" value="Low tissue specificity"/>
</dbReference>
<dbReference type="MalaCards" id="CYB5R3"/>
<dbReference type="MIM" id="250800">
    <property type="type" value="phenotype"/>
</dbReference>
<dbReference type="MIM" id="613213">
    <property type="type" value="gene"/>
</dbReference>
<dbReference type="neXtProt" id="NX_P00387"/>
<dbReference type="OpenTargets" id="ENSG00000100243"/>
<dbReference type="Orphanet" id="621">
    <property type="disease" value="Hereditary methemoglobinemia"/>
</dbReference>
<dbReference type="PharmGKB" id="PA27331"/>
<dbReference type="VEuPathDB" id="HostDB:ENSG00000100243"/>
<dbReference type="eggNOG" id="KOG0534">
    <property type="taxonomic scope" value="Eukaryota"/>
</dbReference>
<dbReference type="GeneTree" id="ENSGT00940000153962"/>
<dbReference type="HOGENOM" id="CLU_003827_9_2_1"/>
<dbReference type="InParanoid" id="P00387"/>
<dbReference type="OMA" id="KGPEMQK"/>
<dbReference type="OrthoDB" id="432685at2759"/>
<dbReference type="PAN-GO" id="P00387">
    <property type="GO annotations" value="1 GO annotation based on evolutionary models"/>
</dbReference>
<dbReference type="PhylomeDB" id="P00387"/>
<dbReference type="TreeFam" id="TF314333"/>
<dbReference type="BioCyc" id="MetaCyc:HS02015-MONOMER"/>
<dbReference type="BRENDA" id="1.6.2.2">
    <property type="organism ID" value="2681"/>
</dbReference>
<dbReference type="PathwayCommons" id="P00387"/>
<dbReference type="Reactome" id="R-HSA-196836">
    <property type="pathway name" value="Vitamin C (ascorbate) metabolism"/>
</dbReference>
<dbReference type="Reactome" id="R-HSA-211945">
    <property type="pathway name" value="Phase I - Functionalization of compounds"/>
</dbReference>
<dbReference type="Reactome" id="R-HSA-6798695">
    <property type="pathway name" value="Neutrophil degranulation"/>
</dbReference>
<dbReference type="SABIO-RK" id="P00387"/>
<dbReference type="SignaLink" id="P00387"/>
<dbReference type="BioGRID-ORCS" id="1727">
    <property type="hits" value="19 hits in 1161 CRISPR screens"/>
</dbReference>
<dbReference type="CD-CODE" id="91857CE7">
    <property type="entry name" value="Nucleolus"/>
</dbReference>
<dbReference type="ChiTaRS" id="CYB5R3">
    <property type="organism name" value="human"/>
</dbReference>
<dbReference type="EvolutionaryTrace" id="P00387"/>
<dbReference type="GeneWiki" id="CYB5R3"/>
<dbReference type="GenomeRNAi" id="1727"/>
<dbReference type="Pharos" id="P00387">
    <property type="development level" value="Tbio"/>
</dbReference>
<dbReference type="PRO" id="PR:P00387"/>
<dbReference type="Proteomes" id="UP000005640">
    <property type="component" value="Chromosome 22"/>
</dbReference>
<dbReference type="RNAct" id="P00387">
    <property type="molecule type" value="protein"/>
</dbReference>
<dbReference type="Bgee" id="ENSG00000100243">
    <property type="expression patterns" value="Expressed in descending thoracic aorta and 212 other cell types or tissues"/>
</dbReference>
<dbReference type="ExpressionAtlas" id="P00387">
    <property type="expression patterns" value="baseline and differential"/>
</dbReference>
<dbReference type="GO" id="GO:0035578">
    <property type="term" value="C:azurophil granule lumen"/>
    <property type="evidence" value="ECO:0000304"/>
    <property type="project" value="Reactome"/>
</dbReference>
<dbReference type="GO" id="GO:0005737">
    <property type="term" value="C:cytoplasm"/>
    <property type="evidence" value="ECO:0000304"/>
    <property type="project" value="ProtInc"/>
</dbReference>
<dbReference type="GO" id="GO:0005829">
    <property type="term" value="C:cytosol"/>
    <property type="evidence" value="ECO:0000314"/>
    <property type="project" value="UniProtKB"/>
</dbReference>
<dbReference type="GO" id="GO:0005783">
    <property type="term" value="C:endoplasmic reticulum"/>
    <property type="evidence" value="ECO:0000314"/>
    <property type="project" value="HPA"/>
</dbReference>
<dbReference type="GO" id="GO:0005789">
    <property type="term" value="C:endoplasmic reticulum membrane"/>
    <property type="evidence" value="ECO:0000314"/>
    <property type="project" value="UniProtKB"/>
</dbReference>
<dbReference type="GO" id="GO:0005576">
    <property type="term" value="C:extracellular region"/>
    <property type="evidence" value="ECO:0000304"/>
    <property type="project" value="Reactome"/>
</dbReference>
<dbReference type="GO" id="GO:0005833">
    <property type="term" value="C:hemoglobin complex"/>
    <property type="evidence" value="ECO:0000304"/>
    <property type="project" value="ProtInc"/>
</dbReference>
<dbReference type="GO" id="GO:0005811">
    <property type="term" value="C:lipid droplet"/>
    <property type="evidence" value="ECO:0000314"/>
    <property type="project" value="UniProtKB"/>
</dbReference>
<dbReference type="GO" id="GO:0016020">
    <property type="term" value="C:membrane"/>
    <property type="evidence" value="ECO:0007005"/>
    <property type="project" value="UniProtKB"/>
</dbReference>
<dbReference type="GO" id="GO:0031966">
    <property type="term" value="C:mitochondrial membrane"/>
    <property type="evidence" value="ECO:0000314"/>
    <property type="project" value="UniProtKB"/>
</dbReference>
<dbReference type="GO" id="GO:0005741">
    <property type="term" value="C:mitochondrial outer membrane"/>
    <property type="evidence" value="ECO:0000304"/>
    <property type="project" value="Reactome"/>
</dbReference>
<dbReference type="GO" id="GO:0005739">
    <property type="term" value="C:mitochondrion"/>
    <property type="evidence" value="ECO:0007005"/>
    <property type="project" value="UniProtKB"/>
</dbReference>
<dbReference type="GO" id="GO:1903958">
    <property type="term" value="C:nitric-oxide synthase complex"/>
    <property type="evidence" value="ECO:0000314"/>
    <property type="project" value="FlyBase"/>
</dbReference>
<dbReference type="GO" id="GO:0004128">
    <property type="term" value="F:cytochrome-b5 reductase activity, acting on NAD(P)H"/>
    <property type="evidence" value="ECO:0000314"/>
    <property type="project" value="UniProtKB"/>
</dbReference>
<dbReference type="GO" id="GO:0071949">
    <property type="term" value="F:FAD binding"/>
    <property type="evidence" value="ECO:0000314"/>
    <property type="project" value="UniProtKB"/>
</dbReference>
<dbReference type="GO" id="GO:0008015">
    <property type="term" value="P:blood circulation"/>
    <property type="evidence" value="ECO:0000304"/>
    <property type="project" value="ProtInc"/>
</dbReference>
<dbReference type="GO" id="GO:0006695">
    <property type="term" value="P:cholesterol biosynthetic process"/>
    <property type="evidence" value="ECO:0007669"/>
    <property type="project" value="UniProtKB-KW"/>
</dbReference>
<dbReference type="GO" id="GO:0006809">
    <property type="term" value="P:nitric oxide biosynthetic process"/>
    <property type="evidence" value="ECO:0000314"/>
    <property type="project" value="FlyBase"/>
</dbReference>
<dbReference type="CDD" id="cd06183">
    <property type="entry name" value="cyt_b5_reduct_like"/>
    <property type="match status" value="1"/>
</dbReference>
<dbReference type="FunFam" id="2.40.30.10:FF:000021">
    <property type="entry name" value="NADH-cytochrome b5 reductase"/>
    <property type="match status" value="1"/>
</dbReference>
<dbReference type="FunFam" id="3.40.50.80:FF:000005">
    <property type="entry name" value="NADH-cytochrome b5 reductase"/>
    <property type="match status" value="1"/>
</dbReference>
<dbReference type="Gene3D" id="3.40.50.80">
    <property type="entry name" value="Nucleotide-binding domain of ferredoxin-NADP reductase (FNR) module"/>
    <property type="match status" value="1"/>
</dbReference>
<dbReference type="Gene3D" id="2.40.30.10">
    <property type="entry name" value="Translation factors"/>
    <property type="match status" value="1"/>
</dbReference>
<dbReference type="InterPro" id="IPR001834">
    <property type="entry name" value="CBR-like"/>
</dbReference>
<dbReference type="InterPro" id="IPR008333">
    <property type="entry name" value="Cbr1-like_FAD-bd_dom"/>
</dbReference>
<dbReference type="InterPro" id="IPR017927">
    <property type="entry name" value="FAD-bd_FR_type"/>
</dbReference>
<dbReference type="InterPro" id="IPR001709">
    <property type="entry name" value="Flavoprot_Pyr_Nucl_cyt_Rdtase"/>
</dbReference>
<dbReference type="InterPro" id="IPR039261">
    <property type="entry name" value="FNR_nucleotide-bd"/>
</dbReference>
<dbReference type="InterPro" id="IPR001433">
    <property type="entry name" value="OxRdtase_FAD/NAD-bd"/>
</dbReference>
<dbReference type="InterPro" id="IPR017938">
    <property type="entry name" value="Riboflavin_synthase-like_b-brl"/>
</dbReference>
<dbReference type="PANTHER" id="PTHR19370">
    <property type="entry name" value="NADH-CYTOCHROME B5 REDUCTASE"/>
    <property type="match status" value="1"/>
</dbReference>
<dbReference type="PANTHER" id="PTHR19370:SF121">
    <property type="entry name" value="NADH-CYTOCHROME B5 REDUCTASE 3"/>
    <property type="match status" value="1"/>
</dbReference>
<dbReference type="Pfam" id="PF00970">
    <property type="entry name" value="FAD_binding_6"/>
    <property type="match status" value="1"/>
</dbReference>
<dbReference type="Pfam" id="PF00175">
    <property type="entry name" value="NAD_binding_1"/>
    <property type="match status" value="1"/>
</dbReference>
<dbReference type="PRINTS" id="PR00406">
    <property type="entry name" value="CYTB5RDTASE"/>
</dbReference>
<dbReference type="PRINTS" id="PR00371">
    <property type="entry name" value="FPNCR"/>
</dbReference>
<dbReference type="SUPFAM" id="SSF52343">
    <property type="entry name" value="Ferredoxin reductase-like, C-terminal NADP-linked domain"/>
    <property type="match status" value="1"/>
</dbReference>
<dbReference type="SUPFAM" id="SSF63380">
    <property type="entry name" value="Riboflavin synthase domain-like"/>
    <property type="match status" value="1"/>
</dbReference>
<dbReference type="PROSITE" id="PS51384">
    <property type="entry name" value="FAD_FR"/>
    <property type="match status" value="1"/>
</dbReference>
<comment type="function">
    <text evidence="5 7 10 12 13 19 21">Catalyzes the reduction of two molecules of cytochrome b5 using NADH as the electron donor.</text>
</comment>
<comment type="catalytic activity">
    <reaction evidence="5 7 10 12 13 19 21">
        <text>2 Fe(III)-[cytochrome b5] + NADH = 2 Fe(II)-[cytochrome b5] + NAD(+) + H(+)</text>
        <dbReference type="Rhea" id="RHEA:46680"/>
        <dbReference type="Rhea" id="RHEA-COMP:10438"/>
        <dbReference type="Rhea" id="RHEA-COMP:10439"/>
        <dbReference type="ChEBI" id="CHEBI:15378"/>
        <dbReference type="ChEBI" id="CHEBI:29033"/>
        <dbReference type="ChEBI" id="CHEBI:29034"/>
        <dbReference type="ChEBI" id="CHEBI:57540"/>
        <dbReference type="ChEBI" id="CHEBI:57945"/>
        <dbReference type="EC" id="1.6.2.2"/>
    </reaction>
    <physiologicalReaction direction="left-to-right" evidence="29 30 31 32 33">
        <dbReference type="Rhea" id="RHEA:46681"/>
    </physiologicalReaction>
</comment>
<comment type="catalytic activity">
    <molecule>Isoform 2</molecule>
    <reaction evidence="21">
        <text>2 Fe(III)-[cytochrome b5] + NADH = 2 Fe(II)-[cytochrome b5] + NAD(+) + H(+)</text>
        <dbReference type="Rhea" id="RHEA:46680"/>
        <dbReference type="Rhea" id="RHEA-COMP:10438"/>
        <dbReference type="Rhea" id="RHEA-COMP:10439"/>
        <dbReference type="ChEBI" id="CHEBI:15378"/>
        <dbReference type="ChEBI" id="CHEBI:29033"/>
        <dbReference type="ChEBI" id="CHEBI:29034"/>
        <dbReference type="ChEBI" id="CHEBI:57540"/>
        <dbReference type="ChEBI" id="CHEBI:57945"/>
        <dbReference type="EC" id="1.6.2.2"/>
    </reaction>
    <physiologicalReaction direction="left-to-right" evidence="34">
        <dbReference type="Rhea" id="RHEA:46681"/>
    </physiologicalReaction>
</comment>
<comment type="cofactor">
    <cofactor evidence="10 12">
        <name>FAD</name>
        <dbReference type="ChEBI" id="CHEBI:57692"/>
    </cofactor>
</comment>
<comment type="biophysicochemical properties">
    <kinetics>
        <KM evidence="12 19">0.5 uM for NADH</KM>
        <KM evidence="7">0.6 uM for NADH</KM>
        <KM evidence="7 12 19">6.6 uM for 2 Fe(III)-[cytochrome b5]</KM>
        <KM evidence="13">8.6 uM for 2 Fe(III)-[cytochrome b5]</KM>
        <text evidence="10 12 19">kcat is 896 sec(-1).</text>
    </kinetics>
</comment>
<comment type="subunit">
    <text evidence="2 3">Component of a complex composed of cytochrome b5, NADH-cytochrome b5 reductase (CYB5R3) and MTARC2 (By similarity). Interacts with MTLN; the interaction is required to maintain cellular lipid composition and leads to stimulation of mitochondrial respiratory complex I activity (By similarity).</text>
</comment>
<comment type="interaction">
    <interactant intactId="EBI-1046040">
        <id>P00387</id>
    </interactant>
    <interactant intactId="EBI-10225815">
        <id>Q08AM2</id>
        <label>ADAM33</label>
    </interactant>
    <organismsDiffer>false</organismsDiffer>
    <experiments>3</experiments>
</comment>
<comment type="interaction">
    <interactant intactId="EBI-1046040">
        <id>P00387</id>
    </interactant>
    <interactant intactId="EBI-11522760">
        <id>Q6RW13-2</id>
        <label>AGTRAP</label>
    </interactant>
    <organismsDiffer>false</organismsDiffer>
    <experiments>3</experiments>
</comment>
<comment type="interaction">
    <interactant intactId="EBI-1046040">
        <id>P00387</id>
    </interactant>
    <interactant intactId="EBI-11957045">
        <id>Q9NVV5-2</id>
        <label>AIG1</label>
    </interactant>
    <organismsDiffer>false</organismsDiffer>
    <experiments>3</experiments>
</comment>
<comment type="interaction">
    <interactant intactId="EBI-1046040">
        <id>P00387</id>
    </interactant>
    <interactant intactId="EBI-3921603">
        <id>Q9BVK2</id>
        <label>ALG8</label>
    </interactant>
    <organismsDiffer>false</organismsDiffer>
    <experiments>3</experiments>
</comment>
<comment type="interaction">
    <interactant intactId="EBI-1046040">
        <id>P00387</id>
    </interactant>
    <interactant intactId="EBI-13059134">
        <id>Q13520</id>
        <label>AQP6</label>
    </interactant>
    <organismsDiffer>false</organismsDiffer>
    <experiments>3</experiments>
</comment>
<comment type="interaction">
    <interactant intactId="EBI-1046040">
        <id>P00387</id>
    </interactant>
    <interactant intactId="EBI-1172335">
        <id>P07306</id>
        <label>ASGR1</label>
    </interactant>
    <organismsDiffer>false</organismsDiffer>
    <experiments>3</experiments>
</comment>
<comment type="interaction">
    <interactant intactId="EBI-1046040">
        <id>P00387</id>
    </interactant>
    <interactant intactId="EBI-752094">
        <id>Q12982</id>
        <label>BNIP2</label>
    </interactant>
    <organismsDiffer>false</organismsDiffer>
    <experiments>3</experiments>
</comment>
<comment type="interaction">
    <interactant intactId="EBI-1046040">
        <id>P00387</id>
    </interactant>
    <interactant intactId="EBI-355947">
        <id>P27824</id>
        <label>CANX</label>
    </interactant>
    <organismsDiffer>false</organismsDiffer>
    <experiments>2</experiments>
</comment>
<comment type="interaction">
    <interactant intactId="EBI-1046040">
        <id>P00387</id>
    </interactant>
    <interactant intactId="EBI-358858">
        <id>O14735</id>
        <label>CDIPT</label>
    </interactant>
    <organismsDiffer>false</organismsDiffer>
    <experiments>3</experiments>
</comment>
<comment type="interaction">
    <interactant intactId="EBI-1046040">
        <id>P00387</id>
    </interactant>
    <interactant intactId="EBI-2622997">
        <id>Q9HA82</id>
        <label>CERS4</label>
    </interactant>
    <organismsDiffer>false</organismsDiffer>
    <experiments>3</experiments>
</comment>
<comment type="interaction">
    <interactant intactId="EBI-1046040">
        <id>P00387</id>
    </interactant>
    <interactant intactId="EBI-12172273">
        <id>O95406</id>
        <label>CNIH1</label>
    </interactant>
    <organismsDiffer>false</organismsDiffer>
    <experiments>3</experiments>
</comment>
<comment type="interaction">
    <interactant intactId="EBI-1046040">
        <id>P00387</id>
    </interactant>
    <interactant intactId="EBI-10241815">
        <id>Q4VAQ0</id>
        <label>COL8A2</label>
    </interactant>
    <organismsDiffer>false</organismsDiffer>
    <experiments>3</experiments>
</comment>
<comment type="interaction">
    <interactant intactId="EBI-1046040">
        <id>P00387</id>
    </interactant>
    <interactant intactId="EBI-10267100">
        <id>Q8N6G5</id>
        <label>CSGALNACT2</label>
    </interactant>
    <organismsDiffer>false</organismsDiffer>
    <experiments>3</experiments>
</comment>
<comment type="interaction">
    <interactant intactId="EBI-1046040">
        <id>P00387</id>
    </interactant>
    <interactant intactId="EBI-18535450">
        <id>Q9GZR5</id>
        <label>ELOVL4</label>
    </interactant>
    <organismsDiffer>false</organismsDiffer>
    <experiments>3</experiments>
</comment>
<comment type="interaction">
    <interactant intactId="EBI-1046040">
        <id>P00387</id>
    </interactant>
    <interactant intactId="EBI-18938272">
        <id>Q96KR6</id>
        <label>FAM210B</label>
    </interactant>
    <organismsDiffer>false</organismsDiffer>
    <experiments>3</experiments>
</comment>
<comment type="interaction">
    <interactant intactId="EBI-1046040">
        <id>P00387</id>
    </interactant>
    <interactant intactId="EBI-2876774">
        <id>Q92520</id>
        <label>FAM3C</label>
    </interactant>
    <organismsDiffer>false</organismsDiffer>
    <experiments>3</experiments>
</comment>
<comment type="interaction">
    <interactant intactId="EBI-1046040">
        <id>P00387</id>
    </interactant>
    <interactant intactId="EBI-12142299">
        <id>Q96IV6</id>
        <label>FAXDC2</label>
    </interactant>
    <organismsDiffer>false</organismsDiffer>
    <experiments>3</experiments>
</comment>
<comment type="interaction">
    <interactant intactId="EBI-1046040">
        <id>P00387</id>
    </interactant>
    <interactant intactId="EBI-714482">
        <id>Q9BWH2</id>
        <label>FUNDC2</label>
    </interactant>
    <organismsDiffer>false</organismsDiffer>
    <experiments>4</experiments>
</comment>
<comment type="interaction">
    <interactant intactId="EBI-1046040">
        <id>P00387</id>
    </interactant>
    <interactant intactId="EBI-12175685">
        <id>Q14802-3</id>
        <label>FXYD3</label>
    </interactant>
    <organismsDiffer>false</organismsDiffer>
    <experiments>3</experiments>
</comment>
<comment type="interaction">
    <interactant intactId="EBI-1046040">
        <id>P00387</id>
    </interactant>
    <interactant intactId="EBI-3436637">
        <id>P01350</id>
        <label>GAST</label>
    </interactant>
    <organismsDiffer>false</organismsDiffer>
    <experiments>3</experiments>
</comment>
<comment type="interaction">
    <interactant intactId="EBI-1046040">
        <id>P00387</id>
    </interactant>
    <interactant intactId="EBI-13345167">
        <id>Q8TDT2</id>
        <label>GPR152</label>
    </interactant>
    <organismsDiffer>false</organismsDiffer>
    <experiments>3</experiments>
</comment>
<comment type="interaction">
    <interactant intactId="EBI-1046040">
        <id>P00387</id>
    </interactant>
    <interactant intactId="EBI-10232876">
        <id>Q14416</id>
        <label>GRM2</label>
    </interactant>
    <organismsDiffer>false</organismsDiffer>
    <experiments>3</experiments>
</comment>
<comment type="interaction">
    <interactant intactId="EBI-1046040">
        <id>P00387</id>
    </interactant>
    <interactant intactId="EBI-714680">
        <id>P69905</id>
        <label>HBA2</label>
    </interactant>
    <organismsDiffer>false</organismsDiffer>
    <experiments>2</experiments>
</comment>
<comment type="interaction">
    <interactant intactId="EBI-1046040">
        <id>P00387</id>
    </interactant>
    <interactant intactId="EBI-18053395">
        <id>Q7Z5P4</id>
        <label>HSD17B13</label>
    </interactant>
    <organismsDiffer>false</organismsDiffer>
    <experiments>3</experiments>
</comment>
<comment type="interaction">
    <interactant intactId="EBI-1046040">
        <id>P00387</id>
    </interactant>
    <interactant intactId="EBI-2865663">
        <id>Q13571</id>
        <label>LAPTM5</label>
    </interactant>
    <organismsDiffer>false</organismsDiffer>
    <experiments>3</experiments>
</comment>
<comment type="interaction">
    <interactant intactId="EBI-1046040">
        <id>P00387</id>
    </interactant>
    <interactant intactId="EBI-718707">
        <id>O75427</id>
        <label>LRCH4</label>
    </interactant>
    <organismsDiffer>false</organismsDiffer>
    <experiments>3</experiments>
</comment>
<comment type="interaction">
    <interactant intactId="EBI-1046040">
        <id>P00387</id>
    </interactant>
    <interactant intactId="EBI-2858252">
        <id>Q6ZSS7</id>
        <label>MFSD6</label>
    </interactant>
    <organismsDiffer>false</organismsDiffer>
    <experiments>3</experiments>
</comment>
<comment type="interaction">
    <interactant intactId="EBI-1046040">
        <id>P00387</id>
    </interactant>
    <interactant intactId="EBI-2802124">
        <id>Q92982</id>
        <label>NINJ1</label>
    </interactant>
    <organismsDiffer>false</organismsDiffer>
    <experiments>3</experiments>
</comment>
<comment type="interaction">
    <interactant intactId="EBI-1046040">
        <id>P00387</id>
    </interactant>
    <interactant intactId="EBI-10262547">
        <id>Q8IXM6</id>
        <label>NRM</label>
    </interactant>
    <organismsDiffer>false</organismsDiffer>
    <experiments>3</experiments>
</comment>
<comment type="interaction">
    <interactant intactId="EBI-1046040">
        <id>P00387</id>
    </interactant>
    <interactant intactId="EBI-6380741">
        <id>P42857</id>
        <label>NSG1</label>
    </interactant>
    <organismsDiffer>false</organismsDiffer>
    <experiments>3</experiments>
</comment>
<comment type="interaction">
    <interactant intactId="EBI-1046040">
        <id>P00387</id>
    </interactant>
    <interactant intactId="EBI-17973370">
        <id>Q969Y0</id>
        <label>NXPE3</label>
    </interactant>
    <organismsDiffer>false</organismsDiffer>
    <experiments>3</experiments>
</comment>
<comment type="interaction">
    <interactant intactId="EBI-1046040">
        <id>P00387</id>
    </interactant>
    <interactant intactId="EBI-11075081">
        <id>Q53FV1</id>
        <label>ORMDL2</label>
    </interactant>
    <organismsDiffer>false</organismsDiffer>
    <experiments>3</experiments>
</comment>
<comment type="interaction">
    <interactant intactId="EBI-1046040">
        <id>P00387</id>
    </interactant>
    <interactant intactId="EBI-8652812">
        <id>P54315</id>
        <label>PNLIPRP1</label>
    </interactant>
    <organismsDiffer>false</organismsDiffer>
    <experiments>3</experiments>
</comment>
<comment type="interaction">
    <interactant intactId="EBI-1046040">
        <id>P00387</id>
    </interactant>
    <interactant intactId="EBI-7545592">
        <id>Q9H6H4</id>
        <label>REEP4</label>
    </interactant>
    <organismsDiffer>false</organismsDiffer>
    <experiments>3</experiments>
</comment>
<comment type="interaction">
    <interactant intactId="EBI-1046040">
        <id>P00387</id>
    </interactant>
    <interactant intactId="EBI-3923031">
        <id>Q14973</id>
        <label>SLC10A1</label>
    </interactant>
    <organismsDiffer>false</organismsDiffer>
    <experiments>3</experiments>
</comment>
<comment type="interaction">
    <interactant intactId="EBI-1046040">
        <id>P00387</id>
    </interactant>
    <interactant intactId="EBI-18159983">
        <id>Q3KNW5</id>
        <label>SLC10A6</label>
    </interactant>
    <organismsDiffer>false</organismsDiffer>
    <experiments>3</experiments>
</comment>
<comment type="interaction">
    <interactant intactId="EBI-1046040">
        <id>P00387</id>
    </interactant>
    <interactant intactId="EBI-12938720">
        <id>Q8WWT9</id>
        <label>SLC13A3</label>
    </interactant>
    <organismsDiffer>false</organismsDiffer>
    <experiments>3</experiments>
</comment>
<comment type="interaction">
    <interactant intactId="EBI-1046040">
        <id>P00387</id>
    </interactant>
    <interactant intactId="EBI-12363689">
        <id>Q96G79</id>
        <label>SLC35A4</label>
    </interactant>
    <organismsDiffer>false</organismsDiffer>
    <experiments>3</experiments>
</comment>
<comment type="interaction">
    <interactant intactId="EBI-1046040">
        <id>P00387</id>
    </interactant>
    <interactant intactId="EBI-1054782">
        <id>Q8TB61</id>
        <label>SLC35B2</label>
    </interactant>
    <organismsDiffer>false</organismsDiffer>
    <experiments>3</experiments>
</comment>
<comment type="interaction">
    <interactant intactId="EBI-1046040">
        <id>P00387</id>
    </interactant>
    <interactant intactId="EBI-10314552">
        <id>Q9NVC3</id>
        <label>SLC38A7</label>
    </interactant>
    <organismsDiffer>false</organismsDiffer>
    <experiments>3</experiments>
</comment>
<comment type="interaction">
    <interactant intactId="EBI-1046040">
        <id>P00387</id>
    </interactant>
    <interactant intactId="EBI-1211440">
        <id>P27105</id>
        <label>STOM</label>
    </interactant>
    <organismsDiffer>false</organismsDiffer>
    <experiments>4</experiments>
</comment>
<comment type="interaction">
    <interactant intactId="EBI-1046040">
        <id>P00387</id>
    </interactant>
    <interactant intactId="EBI-8633987">
        <id>Q12893</id>
        <label>TMEM115</label>
    </interactant>
    <organismsDiffer>false</organismsDiffer>
    <experiments>3</experiments>
</comment>
<comment type="interaction">
    <interactant intactId="EBI-1046040">
        <id>P00387</id>
    </interactant>
    <interactant intactId="EBI-8638294">
        <id>Q9NUH8</id>
        <label>TMEM14B</label>
    </interactant>
    <organismsDiffer>false</organismsDiffer>
    <experiments>3</experiments>
</comment>
<comment type="interaction">
    <interactant intactId="EBI-1046040">
        <id>P00387</id>
    </interactant>
    <interactant intactId="EBI-2339195">
        <id>Q9P0S9</id>
        <label>TMEM14C</label>
    </interactant>
    <organismsDiffer>false</organismsDiffer>
    <experiments>3</experiments>
</comment>
<comment type="interaction">
    <interactant intactId="EBI-1046040">
        <id>P00387</id>
    </interactant>
    <interactant intactId="EBI-11994282">
        <id>Q5SNT2-2</id>
        <label>TMEM201</label>
    </interactant>
    <organismsDiffer>false</organismsDiffer>
    <experiments>3</experiments>
</comment>
<comment type="interaction">
    <interactant intactId="EBI-1046040">
        <id>P00387</id>
    </interactant>
    <interactant intactId="EBI-726044">
        <id>Q9NW97</id>
        <label>TMEM51</label>
    </interactant>
    <organismsDiffer>false</organismsDiffer>
    <experiments>3</experiments>
</comment>
<comment type="interaction">
    <interactant intactId="EBI-1046040">
        <id>P00387</id>
    </interactant>
    <interactant intactId="EBI-2852148">
        <id>Q9H2L4</id>
        <label>TMEM60</label>
    </interactant>
    <organismsDiffer>false</organismsDiffer>
    <experiments>3</experiments>
</comment>
<comment type="interaction">
    <interactant intactId="EBI-1046040">
        <id>P00387</id>
    </interactant>
    <interactant intactId="EBI-8649725">
        <id>Q9BSE2</id>
        <label>TMEM79</label>
    </interactant>
    <organismsDiffer>false</organismsDiffer>
    <experiments>3</experiments>
</comment>
<comment type="interaction">
    <interactant intactId="EBI-1046040">
        <id>P00387</id>
    </interactant>
    <interactant intactId="EBI-359977">
        <id>P01375</id>
        <label>TNF</label>
    </interactant>
    <organismsDiffer>false</organismsDiffer>
    <experiments>3</experiments>
</comment>
<comment type="interaction">
    <interactant intactId="EBI-1046040">
        <id>P00387</id>
    </interactant>
    <interactant intactId="EBI-717441">
        <id>O14798</id>
        <label>TNFRSF10C</label>
    </interactant>
    <organismsDiffer>false</organismsDiffer>
    <experiments>3</experiments>
</comment>
<comment type="interaction">
    <interactant intactId="EBI-1046040">
        <id>P00387</id>
    </interactant>
    <interactant intactId="EBI-2819725">
        <id>Q9Y5Z9</id>
        <label>UBIAD1</label>
    </interactant>
    <organismsDiffer>false</organismsDiffer>
    <experiments>3</experiments>
</comment>
<comment type="interaction">
    <interactant intactId="EBI-1046040">
        <id>P00387</id>
    </interactant>
    <interactant intactId="EBI-12097582">
        <id>P23763-3</id>
        <label>VAMP1</label>
    </interactant>
    <organismsDiffer>false</organismsDiffer>
    <experiments>3</experiments>
</comment>
<comment type="interaction">
    <interactant intactId="EBI-1046040">
        <id>P00387</id>
    </interactant>
    <interactant intactId="EBI-744953">
        <id>O75379</id>
        <label>VAMP4</label>
    </interactant>
    <organismsDiffer>false</organismsDiffer>
    <experiments>3</experiments>
</comment>
<comment type="interaction">
    <interactant intactId="EBI-1046040">
        <id>P00387</id>
    </interactant>
    <interactant intactId="EBI-10191195">
        <id>O95183</id>
        <label>VAMP5</label>
    </interactant>
    <organismsDiffer>false</organismsDiffer>
    <experiments>3</experiments>
</comment>
<comment type="interaction">
    <interactant intactId="EBI-1046040">
        <id>P00387</id>
    </interactant>
    <interactant intactId="EBI-2800296">
        <id>Q96GC9</id>
        <label>VMP1</label>
    </interactant>
    <organismsDiffer>false</organismsDiffer>
    <experiments>3</experiments>
</comment>
<comment type="interaction">
    <interactant intactId="EBI-1046040">
        <id>P00387</id>
    </interactant>
    <interactant intactId="EBI-723529">
        <id>Q14508</id>
        <label>WFDC2</label>
    </interactant>
    <organismsDiffer>false</organismsDiffer>
    <experiments>3</experiments>
</comment>
<comment type="interaction">
    <interactant intactId="EBI-1046040">
        <id>P00387</id>
    </interactant>
    <interactant intactId="EBI-12837904">
        <id>Q96MV8</id>
        <label>ZDHHC15</label>
    </interactant>
    <organismsDiffer>false</organismsDiffer>
    <experiments>3</experiments>
</comment>
<comment type="subcellular location">
    <molecule>Isoform 1</molecule>
    <subcellularLocation>
        <location evidence="21">Endoplasmic reticulum membrane</location>
        <topology evidence="1">Lipid-anchor</topology>
        <orientation evidence="1">Cytoplasmic side</orientation>
    </subcellularLocation>
    <subcellularLocation>
        <location evidence="34">Mitochondrion outer membrane</location>
        <topology evidence="1">Lipid-anchor</topology>
        <orientation evidence="1">Cytoplasmic side</orientation>
    </subcellularLocation>
</comment>
<comment type="subcellular location">
    <molecule>Isoform 2</molecule>
    <subcellularLocation>
        <location evidence="21">Cytoplasm</location>
    </subcellularLocation>
</comment>
<comment type="alternative products">
    <event type="alternative promoter"/>
    <event type="alternative splicing"/>
    <isoform>
        <id>P00387-1</id>
        <name>1</name>
        <name>M</name>
        <sequence type="displayed"/>
    </isoform>
    <isoform>
        <id>P00387-2</id>
        <name>2</name>
        <name>S</name>
        <sequence type="described" ref="VSP_010200"/>
    </isoform>
    <isoform>
        <id>P00387-3</id>
        <name>3</name>
        <sequence type="described" ref="VSP_042827"/>
    </isoform>
</comment>
<comment type="tissue specificity">
    <molecule>Isoform 2</molecule>
    <text evidence="21">Expressed at late stages of erythroid maturation.</text>
</comment>
<comment type="polymorphism">
    <text evidence="20">Ser-117 seems to only be found in persons of African origin. The allele frequency is 0.23 in African Americans. It was not found in Caucasians, Asians, Indo-Aryans, or Arabs. There seems to be no effect on the enzyme activity.</text>
</comment>
<comment type="disease" evidence="5 6 7 9 10 11 12 18 19 22 23">
    <disease id="DI-01723">
        <name>Methemoglobinemia CYB5R3-related</name>
        <acronym>METHB-CYB5R3</acronym>
        <description>A form of methemoglobinemia, a hematologic disease characterized by the presence of excessive amounts of methemoglobin in blood cells, resulting in decreased oxygen carrying capacity of the blood, cyanosis and hypoxia. There are two types of methemoglobinemia CYB5R3-related. In type 1, the defect affects the soluble form of the enzyme, is restricted to red blood cells, and causes well-tolerated methemoglobinemia. In type 2, the defect affects both the soluble and microsomal forms of the enzyme and is thus generalized, affecting red cells, leukocytes and all body tissues. Type 2 methemoglobinemia is associated with mental deficiency and other neurologic symptoms.</description>
        <dbReference type="MIM" id="250800"/>
    </disease>
    <text>The disease is caused by variants affecting the gene represented in this entry.</text>
</comment>
<comment type="similarity">
    <text evidence="28">Belongs to the flavoprotein pyridine nucleotide cytochrome reductase family.</text>
</comment>
<accession>P00387</accession>
<accession>B1AHF2</accession>
<accession>B7Z7L3</accession>
<accession>O75675</accession>
<accession>Q8TDL8</accession>
<accession>Q8WTS8</accession>
<accession>Q9UEN4</accession>
<accession>Q9UEN5</accession>
<accession>Q9UL55</accession>
<accession>Q9UL56</accession>